<evidence type="ECO:0000250" key="1"/>
<evidence type="ECO:0000250" key="2">
    <source>
        <dbReference type="UniProtKB" id="O92972"/>
    </source>
</evidence>
<evidence type="ECO:0000250" key="3">
    <source>
        <dbReference type="UniProtKB" id="P26662"/>
    </source>
</evidence>
<evidence type="ECO:0000250" key="4">
    <source>
        <dbReference type="UniProtKB" id="P26663"/>
    </source>
</evidence>
<evidence type="ECO:0000250" key="5">
    <source>
        <dbReference type="UniProtKB" id="P26664"/>
    </source>
</evidence>
<evidence type="ECO:0000250" key="6">
    <source>
        <dbReference type="UniProtKB" id="P27958"/>
    </source>
</evidence>
<evidence type="ECO:0000250" key="7">
    <source>
        <dbReference type="UniProtKB" id="P29846"/>
    </source>
</evidence>
<evidence type="ECO:0000250" key="8">
    <source>
        <dbReference type="UniProtKB" id="Q01403"/>
    </source>
</evidence>
<evidence type="ECO:0000250" key="9">
    <source>
        <dbReference type="UniProtKB" id="Q03463"/>
    </source>
</evidence>
<evidence type="ECO:0000250" key="10">
    <source>
        <dbReference type="UniProtKB" id="Q5EG65"/>
    </source>
</evidence>
<evidence type="ECO:0000250" key="11">
    <source>
        <dbReference type="UniProtKB" id="Q913V3"/>
    </source>
</evidence>
<evidence type="ECO:0000250" key="12">
    <source>
        <dbReference type="UniProtKB" id="Q99IB8"/>
    </source>
</evidence>
<evidence type="ECO:0000255" key="13"/>
<evidence type="ECO:0000255" key="14">
    <source>
        <dbReference type="PROSITE-ProRule" id="PRU00539"/>
    </source>
</evidence>
<evidence type="ECO:0000255" key="15">
    <source>
        <dbReference type="PROSITE-ProRule" id="PRU00541"/>
    </source>
</evidence>
<evidence type="ECO:0000255" key="16">
    <source>
        <dbReference type="PROSITE-ProRule" id="PRU01030"/>
    </source>
</evidence>
<evidence type="ECO:0000255" key="17">
    <source>
        <dbReference type="PROSITE-ProRule" id="PRU01166"/>
    </source>
</evidence>
<evidence type="ECO:0000256" key="18">
    <source>
        <dbReference type="SAM" id="MobiDB-lite"/>
    </source>
</evidence>
<evidence type="ECO:0000269" key="19">
    <source>
    </source>
</evidence>
<evidence type="ECO:0000269" key="20">
    <source>
    </source>
</evidence>
<evidence type="ECO:0000269" key="21">
    <source>
    </source>
</evidence>
<evidence type="ECO:0000269" key="22">
    <source>
    </source>
</evidence>
<evidence type="ECO:0000269" key="23">
    <source>
    </source>
</evidence>
<evidence type="ECO:0000269" key="24">
    <source>
    </source>
</evidence>
<evidence type="ECO:0000269" key="25">
    <source>
    </source>
</evidence>
<evidence type="ECO:0000269" key="26">
    <source>
    </source>
</evidence>
<evidence type="ECO:0000269" key="27">
    <source>
    </source>
</evidence>
<evidence type="ECO:0000269" key="28">
    <source>
    </source>
</evidence>
<evidence type="ECO:0000269" key="29">
    <source>
    </source>
</evidence>
<evidence type="ECO:0000303" key="30">
    <source>
    </source>
</evidence>
<evidence type="ECO:0000305" key="31"/>
<evidence type="ECO:0000305" key="32">
    <source>
    </source>
</evidence>
<evidence type="ECO:0007744" key="33">
    <source>
        <dbReference type="PDB" id="2KWT"/>
    </source>
</evidence>
<evidence type="ECO:0007744" key="34">
    <source>
        <dbReference type="PDB" id="2KWZ"/>
    </source>
</evidence>
<evidence type="ECO:0007744" key="35">
    <source>
        <dbReference type="PDB" id="3FQL"/>
    </source>
</evidence>
<evidence type="ECO:0007744" key="36">
    <source>
        <dbReference type="PDB" id="3FQQ"/>
    </source>
</evidence>
<evidence type="ECO:0007744" key="37">
    <source>
        <dbReference type="PDB" id="3KN2"/>
    </source>
</evidence>
<evidence type="ECO:0007744" key="38">
    <source>
        <dbReference type="PDB" id="3KQH"/>
    </source>
</evidence>
<evidence type="ECO:0007744" key="39">
    <source>
        <dbReference type="PDB" id="3KQK"/>
    </source>
</evidence>
<evidence type="ECO:0007744" key="40">
    <source>
        <dbReference type="PDB" id="3KQL"/>
    </source>
</evidence>
<evidence type="ECO:0007744" key="41">
    <source>
        <dbReference type="PDB" id="3KQN"/>
    </source>
</evidence>
<evidence type="ECO:0007744" key="42">
    <source>
        <dbReference type="PDB" id="3KQU"/>
    </source>
</evidence>
<evidence type="ECO:0007744" key="43">
    <source>
        <dbReference type="PDB" id="4NLD"/>
    </source>
</evidence>
<evidence type="ECO:0007744" key="44">
    <source>
        <dbReference type="PDB" id="4U01"/>
    </source>
</evidence>
<evidence type="ECO:0007744" key="45">
    <source>
        <dbReference type="PDB" id="5E4F"/>
    </source>
</evidence>
<evidence type="ECO:0007744" key="46">
    <source>
        <dbReference type="PDB" id="5PZK"/>
    </source>
</evidence>
<evidence type="ECO:0007744" key="47">
    <source>
        <dbReference type="PDB" id="5PZL"/>
    </source>
</evidence>
<evidence type="ECO:0007744" key="48">
    <source>
        <dbReference type="PDB" id="5PZM"/>
    </source>
</evidence>
<evidence type="ECO:0007744" key="49">
    <source>
        <dbReference type="PDB" id="5PZN"/>
    </source>
</evidence>
<evidence type="ECO:0007744" key="50">
    <source>
        <dbReference type="PDB" id="5PZO"/>
    </source>
</evidence>
<evidence type="ECO:0007744" key="51">
    <source>
        <dbReference type="PDB" id="5PZP"/>
    </source>
</evidence>
<evidence type="ECO:0007744" key="52">
    <source>
        <dbReference type="PDB" id="5TRH"/>
    </source>
</evidence>
<evidence type="ECO:0007744" key="53">
    <source>
        <dbReference type="PDB" id="5TRI"/>
    </source>
</evidence>
<evidence type="ECO:0007744" key="54">
    <source>
        <dbReference type="PDB" id="5TRJ"/>
    </source>
</evidence>
<evidence type="ECO:0007744" key="55">
    <source>
        <dbReference type="PDB" id="5TRK"/>
    </source>
</evidence>
<evidence type="ECO:0007829" key="56">
    <source>
        <dbReference type="PDB" id="2JY0"/>
    </source>
</evidence>
<evidence type="ECO:0007829" key="57">
    <source>
        <dbReference type="PDB" id="2KWT"/>
    </source>
</evidence>
<evidence type="ECO:0007829" key="58">
    <source>
        <dbReference type="PDB" id="2KWZ"/>
    </source>
</evidence>
<evidence type="ECO:0007829" key="59">
    <source>
        <dbReference type="PDB" id="3FQL"/>
    </source>
</evidence>
<evidence type="ECO:0007829" key="60">
    <source>
        <dbReference type="PDB" id="3FQM"/>
    </source>
</evidence>
<evidence type="ECO:0007829" key="61">
    <source>
        <dbReference type="PDB" id="3KN2"/>
    </source>
</evidence>
<evidence type="ECO:0007829" key="62">
    <source>
        <dbReference type="PDB" id="3KQH"/>
    </source>
</evidence>
<evidence type="ECO:0007829" key="63">
    <source>
        <dbReference type="PDB" id="3KQN"/>
    </source>
</evidence>
<evidence type="ECO:0007829" key="64">
    <source>
        <dbReference type="PDB" id="3QGF"/>
    </source>
</evidence>
<evidence type="ECO:0007829" key="65">
    <source>
        <dbReference type="PDB" id="3QGG"/>
    </source>
</evidence>
<evidence type="ECO:0007829" key="66">
    <source>
        <dbReference type="PDB" id="4NLD"/>
    </source>
</evidence>
<evidence type="ECO:0007829" key="67">
    <source>
        <dbReference type="PDB" id="4U01"/>
    </source>
</evidence>
<evidence type="ECO:0007829" key="68">
    <source>
        <dbReference type="PDB" id="5PZK"/>
    </source>
</evidence>
<evidence type="ECO:0007829" key="69">
    <source>
        <dbReference type="PDB" id="5PZL"/>
    </source>
</evidence>
<evidence type="ECO:0007829" key="70">
    <source>
        <dbReference type="PDB" id="5PZN"/>
    </source>
</evidence>
<evidence type="ECO:0007829" key="71">
    <source>
        <dbReference type="PDB" id="5TRK"/>
    </source>
</evidence>
<organism>
    <name type="scientific">Hepatitis C virus genotype 1b (isolate Con1)</name>
    <name type="common">HCV</name>
    <dbReference type="NCBI Taxonomy" id="333284"/>
    <lineage>
        <taxon>Viruses</taxon>
        <taxon>Riboviria</taxon>
        <taxon>Orthornavirae</taxon>
        <taxon>Kitrinoviricota</taxon>
        <taxon>Flasuviricetes</taxon>
        <taxon>Amarillovirales</taxon>
        <taxon>Flaviviridae</taxon>
        <taxon>Hepacivirus</taxon>
        <taxon>Hepacivirus hominis</taxon>
    </lineage>
</organism>
<keyword id="KW-0002">3D-structure</keyword>
<keyword id="KW-0007">Acetylation</keyword>
<keyword id="KW-1072">Activation of host autophagy by virus</keyword>
<keyword id="KW-0053">Apoptosis</keyword>
<keyword id="KW-0067">ATP-binding</keyword>
<keyword id="KW-0167">Capsid protein</keyword>
<keyword id="KW-1165">Clathrin-mediated endocytosis of virus by host</keyword>
<keyword id="KW-1015">Disulfide bond</keyword>
<keyword id="KW-1170">Fusion of virus membrane with host endosomal membrane</keyword>
<keyword id="KW-1168">Fusion of virus membrane with host membrane</keyword>
<keyword id="KW-1078">G1/S host cell cycle checkpoint dysregulation by virus</keyword>
<keyword id="KW-0325">Glycoprotein</keyword>
<keyword id="KW-0347">Helicase</keyword>
<keyword id="KW-1032">Host cell membrane</keyword>
<keyword id="KW-1035">Host cytoplasm</keyword>
<keyword id="KW-1038">Host endoplasmic reticulum</keyword>
<keyword id="KW-1041">Host lipid droplet</keyword>
<keyword id="KW-1043">Host membrane</keyword>
<keyword id="KW-1045">Host mitochondrion</keyword>
<keyword id="KW-1048">Host nucleus</keyword>
<keyword id="KW-0945">Host-virus interaction</keyword>
<keyword id="KW-0378">Hydrolase</keyword>
<keyword id="KW-1090">Inhibition of host innate immune response by virus</keyword>
<keyword id="KW-1114">Inhibition of host interferon signaling pathway by virus</keyword>
<keyword id="KW-1097">Inhibition of host MAVS by virus</keyword>
<keyword id="KW-1113">Inhibition of host RLR pathway by virus</keyword>
<keyword id="KW-1105">Inhibition of host STAT1 by virus</keyword>
<keyword id="KW-1110">Inhibition of host TRAFs by virus</keyword>
<keyword id="KW-0922">Interferon antiviral system evasion</keyword>
<keyword id="KW-0407">Ion channel</keyword>
<keyword id="KW-0406">Ion transport</keyword>
<keyword id="KW-1017">Isopeptide bond</keyword>
<keyword id="KW-0449">Lipoprotein</keyword>
<keyword id="KW-0460">Magnesium</keyword>
<keyword id="KW-0472">Membrane</keyword>
<keyword id="KW-0479">Metal-binding</keyword>
<keyword id="KW-1121">Modulation of host cell cycle by virus</keyword>
<keyword id="KW-0511">Multifunctional enzyme</keyword>
<keyword id="KW-0547">Nucleotide-binding</keyword>
<keyword id="KW-0548">Nucleotidyltransferase</keyword>
<keyword id="KW-0553">Oncogene</keyword>
<keyword id="KW-0564">Palmitate</keyword>
<keyword id="KW-0597">Phosphoprotein</keyword>
<keyword id="KW-0645">Protease</keyword>
<keyword id="KW-0687">Ribonucleoprotein</keyword>
<keyword id="KW-0694">RNA-binding</keyword>
<keyword id="KW-0696">RNA-directed RNA polymerase</keyword>
<keyword id="KW-0720">Serine protease</keyword>
<keyword id="KW-0729">SH3-binding</keyword>
<keyword id="KW-0788">Thiol protease</keyword>
<keyword id="KW-0804">Transcription</keyword>
<keyword id="KW-0805">Transcription regulation</keyword>
<keyword id="KW-0808">Transferase</keyword>
<keyword id="KW-0812">Transmembrane</keyword>
<keyword id="KW-1133">Transmembrane helix</keyword>
<keyword id="KW-0813">Transport</keyword>
<keyword id="KW-0832">Ubl conjugation</keyword>
<keyword id="KW-1161">Viral attachment to host cell</keyword>
<keyword id="KW-0261">Viral envelope protein</keyword>
<keyword id="KW-0899">Viral immunoevasion</keyword>
<keyword id="KW-1182">Viral ion channel</keyword>
<keyword id="KW-0543">Viral nucleoprotein</keyword>
<keyword id="KW-1162">Viral penetration into host cytoplasm</keyword>
<keyword id="KW-0693">Viral RNA replication</keyword>
<keyword id="KW-0946">Virion</keyword>
<keyword id="KW-1164">Virus endocytosis by host</keyword>
<keyword id="KW-1160">Virus entry into host cell</keyword>
<keyword id="KW-0862">Zinc</keyword>
<accession>Q9WMX2</accession>
<name>POLG_HCVCO</name>
<dbReference type="EC" id="3.4.22.-" evidence="4"/>
<dbReference type="EC" id="3.4.21.98" evidence="6"/>
<dbReference type="EC" id="3.6.1.15" evidence="25"/>
<dbReference type="EC" id="3.6.4.13" evidence="25"/>
<dbReference type="EC" id="2.7.7.48" evidence="6"/>
<dbReference type="EMBL" id="AJ238799">
    <property type="protein sequence ID" value="CAB46677.1"/>
    <property type="molecule type" value="Genomic_RNA"/>
</dbReference>
<dbReference type="PIR" id="A61196">
    <property type="entry name" value="A61196"/>
</dbReference>
<dbReference type="PIR" id="PQ0246">
    <property type="entry name" value="PQ0246"/>
</dbReference>
<dbReference type="PIR" id="PS0329">
    <property type="entry name" value="PS0329"/>
</dbReference>
<dbReference type="PDB" id="1ZH1">
    <property type="method" value="X-ray"/>
    <property type="resolution" value="2.50 A"/>
    <property type="chains" value="A/B=2008-2170"/>
</dbReference>
<dbReference type="PDB" id="2JY0">
    <property type="method" value="NMR"/>
    <property type="chains" value="A=810-836"/>
</dbReference>
<dbReference type="PDB" id="2KWT">
    <property type="method" value="NMR"/>
    <property type="chains" value="A=836-868"/>
</dbReference>
<dbReference type="PDB" id="2KWZ">
    <property type="method" value="NMR"/>
    <property type="chains" value="A=869-908"/>
</dbReference>
<dbReference type="PDB" id="3FQL">
    <property type="method" value="X-ray"/>
    <property type="resolution" value="1.80 A"/>
    <property type="chains" value="A=2421-2989"/>
</dbReference>
<dbReference type="PDB" id="3FQM">
    <property type="method" value="X-ray"/>
    <property type="resolution" value="1.90 A"/>
    <property type="chains" value="A/B=2005-2174"/>
</dbReference>
<dbReference type="PDB" id="3FQQ">
    <property type="method" value="X-ray"/>
    <property type="resolution" value="2.20 A"/>
    <property type="chains" value="A/B=2005-2174"/>
</dbReference>
<dbReference type="PDB" id="3KN2">
    <property type="method" value="X-ray"/>
    <property type="resolution" value="2.30 A"/>
    <property type="chains" value="B/D=1678-1696"/>
</dbReference>
<dbReference type="PDB" id="3KQH">
    <property type="method" value="X-ray"/>
    <property type="resolution" value="2.40 A"/>
    <property type="chains" value="A/B=1215-1650"/>
</dbReference>
<dbReference type="PDB" id="3KQK">
    <property type="method" value="X-ray"/>
    <property type="resolution" value="2.80 A"/>
    <property type="chains" value="A/B=1215-1650"/>
</dbReference>
<dbReference type="PDB" id="3KQL">
    <property type="method" value="X-ray"/>
    <property type="resolution" value="2.50 A"/>
    <property type="chains" value="A/B=1215-1650"/>
</dbReference>
<dbReference type="PDB" id="3KQN">
    <property type="method" value="X-ray"/>
    <property type="resolution" value="2.05 A"/>
    <property type="chains" value="A=1215-1650"/>
</dbReference>
<dbReference type="PDB" id="3KQU">
    <property type="method" value="X-ray"/>
    <property type="resolution" value="2.40 A"/>
    <property type="chains" value="A/B/C/D/E/F=1215-1650"/>
</dbReference>
<dbReference type="PDB" id="3Q0Z">
    <property type="method" value="X-ray"/>
    <property type="resolution" value="2.29 A"/>
    <property type="chains" value="A/B=2420-2992"/>
</dbReference>
<dbReference type="PDB" id="3QGD">
    <property type="method" value="X-ray"/>
    <property type="resolution" value="2.60 A"/>
    <property type="chains" value="A/B=2420-2992"/>
</dbReference>
<dbReference type="PDB" id="3QGE">
    <property type="method" value="X-ray"/>
    <property type="resolution" value="3.00 A"/>
    <property type="chains" value="A/B=2420-2992"/>
</dbReference>
<dbReference type="PDB" id="3QGF">
    <property type="method" value="X-ray"/>
    <property type="resolution" value="2.45 A"/>
    <property type="chains" value="A/B=2420-2992"/>
</dbReference>
<dbReference type="PDB" id="3QGG">
    <property type="method" value="X-ray"/>
    <property type="resolution" value="3.22 A"/>
    <property type="chains" value="A/B=2420-2992"/>
</dbReference>
<dbReference type="PDB" id="4NLD">
    <property type="method" value="X-ray"/>
    <property type="resolution" value="2.75 A"/>
    <property type="chains" value="A=2420-2992"/>
</dbReference>
<dbReference type="PDB" id="4U01">
    <property type="method" value="X-ray"/>
    <property type="resolution" value="2.80 A"/>
    <property type="chains" value="A/B/C/D/E/F/G/H/J=1027-1206"/>
</dbReference>
<dbReference type="PDB" id="5E4F">
    <property type="method" value="X-ray"/>
    <property type="resolution" value="2.10 A"/>
    <property type="chains" value="A/B=1215-1651"/>
</dbReference>
<dbReference type="PDB" id="5PZK">
    <property type="method" value="X-ray"/>
    <property type="resolution" value="2.20 A"/>
    <property type="chains" value="A/B=2420-2992"/>
</dbReference>
<dbReference type="PDB" id="5PZL">
    <property type="method" value="X-ray"/>
    <property type="resolution" value="2.06 A"/>
    <property type="chains" value="A/B=2420-2992"/>
</dbReference>
<dbReference type="PDB" id="5PZM">
    <property type="method" value="X-ray"/>
    <property type="resolution" value="2.54 A"/>
    <property type="chains" value="A/B=2420-2992"/>
</dbReference>
<dbReference type="PDB" id="5PZN">
    <property type="method" value="X-ray"/>
    <property type="resolution" value="2.25 A"/>
    <property type="chains" value="A/B=2420-2992"/>
</dbReference>
<dbReference type="PDB" id="5PZO">
    <property type="method" value="X-ray"/>
    <property type="resolution" value="2.80 A"/>
    <property type="chains" value="A/B=2420-2992"/>
</dbReference>
<dbReference type="PDB" id="5PZP">
    <property type="method" value="X-ray"/>
    <property type="resolution" value="2.95 A"/>
    <property type="chains" value="A/B=2420-2992"/>
</dbReference>
<dbReference type="PDB" id="5TRH">
    <property type="method" value="X-ray"/>
    <property type="resolution" value="2.70 A"/>
    <property type="chains" value="A/B=2420-2992"/>
</dbReference>
<dbReference type="PDB" id="5TRI">
    <property type="method" value="X-ray"/>
    <property type="resolution" value="2.30 A"/>
    <property type="chains" value="A/B=2420-2992"/>
</dbReference>
<dbReference type="PDB" id="5TRJ">
    <property type="method" value="X-ray"/>
    <property type="resolution" value="2.57 A"/>
    <property type="chains" value="A/B=2420-2992"/>
</dbReference>
<dbReference type="PDB" id="5TRK">
    <property type="method" value="X-ray"/>
    <property type="resolution" value="2.06 A"/>
    <property type="chains" value="A/B=2420-2992"/>
</dbReference>
<dbReference type="PDB" id="5TWN">
    <property type="method" value="X-ray"/>
    <property type="resolution" value="3.04 A"/>
    <property type="chains" value="A/B=2420-2992"/>
</dbReference>
<dbReference type="PDBsum" id="1ZH1"/>
<dbReference type="PDBsum" id="2JY0"/>
<dbReference type="PDBsum" id="2KWT"/>
<dbReference type="PDBsum" id="2KWZ"/>
<dbReference type="PDBsum" id="3FQL"/>
<dbReference type="PDBsum" id="3FQM"/>
<dbReference type="PDBsum" id="3FQQ"/>
<dbReference type="PDBsum" id="3KN2"/>
<dbReference type="PDBsum" id="3KQH"/>
<dbReference type="PDBsum" id="3KQK"/>
<dbReference type="PDBsum" id="3KQL"/>
<dbReference type="PDBsum" id="3KQN"/>
<dbReference type="PDBsum" id="3KQU"/>
<dbReference type="PDBsum" id="3Q0Z"/>
<dbReference type="PDBsum" id="3QGD"/>
<dbReference type="PDBsum" id="3QGE"/>
<dbReference type="PDBsum" id="3QGF"/>
<dbReference type="PDBsum" id="3QGG"/>
<dbReference type="PDBsum" id="4NLD"/>
<dbReference type="PDBsum" id="4U01"/>
<dbReference type="PDBsum" id="5E4F"/>
<dbReference type="PDBsum" id="5PZK"/>
<dbReference type="PDBsum" id="5PZL"/>
<dbReference type="PDBsum" id="5PZM"/>
<dbReference type="PDBsum" id="5PZN"/>
<dbReference type="PDBsum" id="5PZO"/>
<dbReference type="PDBsum" id="5PZP"/>
<dbReference type="PDBsum" id="5TRH"/>
<dbReference type="PDBsum" id="5TRI"/>
<dbReference type="PDBsum" id="5TRJ"/>
<dbReference type="PDBsum" id="5TRK"/>
<dbReference type="PDBsum" id="5TWN"/>
<dbReference type="BMRB" id="Q9WMX2"/>
<dbReference type="SMR" id="Q9WMX2"/>
<dbReference type="IntAct" id="Q9WMX2">
    <property type="interactions" value="450"/>
</dbReference>
<dbReference type="MINT" id="Q9WMX2"/>
<dbReference type="BindingDB" id="Q9WMX2"/>
<dbReference type="ChEMBL" id="CHEMBL5536"/>
<dbReference type="DrugBank" id="DB07238">
    <property type="generic name" value="Nesbuvir"/>
</dbReference>
<dbReference type="DrugCentral" id="Q9WMX2"/>
<dbReference type="MEROPS" id="S29.001"/>
<dbReference type="iPTMnet" id="Q9WMX2"/>
<dbReference type="euHCVdb" id="AJ238799"/>
<dbReference type="EvolutionaryTrace" id="Q9WMX2"/>
<dbReference type="Proteomes" id="UP000007414">
    <property type="component" value="Genome"/>
</dbReference>
<dbReference type="GO" id="GO:0044167">
    <property type="term" value="C:host cell endoplasmic reticulum membrane"/>
    <property type="evidence" value="ECO:0007669"/>
    <property type="project" value="UniProtKB-SubCell"/>
</dbReference>
<dbReference type="GO" id="GO:0044186">
    <property type="term" value="C:host cell lipid droplet"/>
    <property type="evidence" value="ECO:0007669"/>
    <property type="project" value="UniProtKB-SubCell"/>
</dbReference>
<dbReference type="GO" id="GO:0044191">
    <property type="term" value="C:host cell mitochondrial membrane"/>
    <property type="evidence" value="ECO:0007669"/>
    <property type="project" value="UniProtKB-SubCell"/>
</dbReference>
<dbReference type="GO" id="GO:0042025">
    <property type="term" value="C:host cell nucleus"/>
    <property type="evidence" value="ECO:0007669"/>
    <property type="project" value="UniProtKB-SubCell"/>
</dbReference>
<dbReference type="GO" id="GO:0044220">
    <property type="term" value="C:host cell perinuclear region of cytoplasm"/>
    <property type="evidence" value="ECO:0007669"/>
    <property type="project" value="UniProtKB-SubCell"/>
</dbReference>
<dbReference type="GO" id="GO:0020002">
    <property type="term" value="C:host cell plasma membrane"/>
    <property type="evidence" value="ECO:0007669"/>
    <property type="project" value="UniProtKB-SubCell"/>
</dbReference>
<dbReference type="GO" id="GO:0016020">
    <property type="term" value="C:membrane"/>
    <property type="evidence" value="ECO:0007669"/>
    <property type="project" value="UniProtKB-KW"/>
</dbReference>
<dbReference type="GO" id="GO:0032991">
    <property type="term" value="C:protein-containing complex"/>
    <property type="evidence" value="ECO:0000314"/>
    <property type="project" value="CAFA"/>
</dbReference>
<dbReference type="GO" id="GO:1990904">
    <property type="term" value="C:ribonucleoprotein complex"/>
    <property type="evidence" value="ECO:0007669"/>
    <property type="project" value="UniProtKB-KW"/>
</dbReference>
<dbReference type="GO" id="GO:0019031">
    <property type="term" value="C:viral envelope"/>
    <property type="evidence" value="ECO:0007669"/>
    <property type="project" value="UniProtKB-KW"/>
</dbReference>
<dbReference type="GO" id="GO:0019013">
    <property type="term" value="C:viral nucleocapsid"/>
    <property type="evidence" value="ECO:0007669"/>
    <property type="project" value="UniProtKB-KW"/>
</dbReference>
<dbReference type="GO" id="GO:0055036">
    <property type="term" value="C:virion membrane"/>
    <property type="evidence" value="ECO:0007669"/>
    <property type="project" value="UniProtKB-SubCell"/>
</dbReference>
<dbReference type="GO" id="GO:0005524">
    <property type="term" value="F:ATP binding"/>
    <property type="evidence" value="ECO:0007669"/>
    <property type="project" value="UniProtKB-KW"/>
</dbReference>
<dbReference type="GO" id="GO:0016887">
    <property type="term" value="F:ATP hydrolysis activity"/>
    <property type="evidence" value="ECO:0007669"/>
    <property type="project" value="RHEA"/>
</dbReference>
<dbReference type="GO" id="GO:0015267">
    <property type="term" value="F:channel activity"/>
    <property type="evidence" value="ECO:0007669"/>
    <property type="project" value="UniProtKB-KW"/>
</dbReference>
<dbReference type="GO" id="GO:0004197">
    <property type="term" value="F:cysteine-type endopeptidase activity"/>
    <property type="evidence" value="ECO:0007669"/>
    <property type="project" value="InterPro"/>
</dbReference>
<dbReference type="GO" id="GO:0042802">
    <property type="term" value="F:identical protein binding"/>
    <property type="evidence" value="ECO:0000314"/>
    <property type="project" value="CAFA"/>
</dbReference>
<dbReference type="GO" id="GO:0003723">
    <property type="term" value="F:RNA binding"/>
    <property type="evidence" value="ECO:0007669"/>
    <property type="project" value="UniProtKB-KW"/>
</dbReference>
<dbReference type="GO" id="GO:0003724">
    <property type="term" value="F:RNA helicase activity"/>
    <property type="evidence" value="ECO:0007669"/>
    <property type="project" value="UniProtKB-EC"/>
</dbReference>
<dbReference type="GO" id="GO:0003968">
    <property type="term" value="F:RNA-directed RNA polymerase activity"/>
    <property type="evidence" value="ECO:0007669"/>
    <property type="project" value="UniProtKB-KW"/>
</dbReference>
<dbReference type="GO" id="GO:0004252">
    <property type="term" value="F:serine-type endopeptidase activity"/>
    <property type="evidence" value="ECO:0007669"/>
    <property type="project" value="InterPro"/>
</dbReference>
<dbReference type="GO" id="GO:0017124">
    <property type="term" value="F:SH3 domain binding"/>
    <property type="evidence" value="ECO:0007669"/>
    <property type="project" value="UniProtKB-KW"/>
</dbReference>
<dbReference type="GO" id="GO:0005198">
    <property type="term" value="F:structural molecule activity"/>
    <property type="evidence" value="ECO:0007669"/>
    <property type="project" value="InterPro"/>
</dbReference>
<dbReference type="GO" id="GO:0008270">
    <property type="term" value="F:zinc ion binding"/>
    <property type="evidence" value="ECO:0000314"/>
    <property type="project" value="CAFA"/>
</dbReference>
<dbReference type="GO" id="GO:0075512">
    <property type="term" value="P:clathrin-dependent endocytosis of virus by host cell"/>
    <property type="evidence" value="ECO:0007669"/>
    <property type="project" value="UniProtKB-KW"/>
</dbReference>
<dbReference type="GO" id="GO:0039654">
    <property type="term" value="P:fusion of virus membrane with host endosome membrane"/>
    <property type="evidence" value="ECO:0007669"/>
    <property type="project" value="UniProtKB-KW"/>
</dbReference>
<dbReference type="GO" id="GO:0034220">
    <property type="term" value="P:monoatomic ion transmembrane transport"/>
    <property type="evidence" value="ECO:0007669"/>
    <property type="project" value="UniProtKB-KW"/>
</dbReference>
<dbReference type="GO" id="GO:0039690">
    <property type="term" value="P:positive stranded viral RNA replication"/>
    <property type="evidence" value="ECO:0000315"/>
    <property type="project" value="CAFA"/>
</dbReference>
<dbReference type="GO" id="GO:0006508">
    <property type="term" value="P:proteolysis"/>
    <property type="evidence" value="ECO:0007669"/>
    <property type="project" value="UniProtKB-KW"/>
</dbReference>
<dbReference type="GO" id="GO:0039520">
    <property type="term" value="P:symbiont-mediated activation of host autophagy"/>
    <property type="evidence" value="ECO:0007669"/>
    <property type="project" value="UniProtKB-KW"/>
</dbReference>
<dbReference type="GO" id="GO:0039645">
    <property type="term" value="P:symbiont-mediated perturbation of host cell cycle G1/S transition checkpoint"/>
    <property type="evidence" value="ECO:0007669"/>
    <property type="project" value="UniProtKB-KW"/>
</dbReference>
<dbReference type="GO" id="GO:0039545">
    <property type="term" value="P:symbiont-mediated suppression of host cytoplasmic pattern recognition receptor signaling pathway via inhibition of MAVS activity"/>
    <property type="evidence" value="ECO:0007669"/>
    <property type="project" value="UniProtKB-KW"/>
</dbReference>
<dbReference type="GO" id="GO:0039563">
    <property type="term" value="P:symbiont-mediated suppression of host JAK-STAT cascade via inhibition of STAT1 activity"/>
    <property type="evidence" value="ECO:0007669"/>
    <property type="project" value="UniProtKB-KW"/>
</dbReference>
<dbReference type="GO" id="GO:0039527">
    <property type="term" value="P:symbiont-mediated suppression of host TRAF-mediated signal transduction"/>
    <property type="evidence" value="ECO:0007669"/>
    <property type="project" value="UniProtKB-KW"/>
</dbReference>
<dbReference type="GO" id="GO:0039502">
    <property type="term" value="P:symbiont-mediated suppression of host type I interferon-mediated signaling pathway"/>
    <property type="evidence" value="ECO:0007669"/>
    <property type="project" value="UniProtKB-KW"/>
</dbReference>
<dbReference type="GO" id="GO:0019087">
    <property type="term" value="P:symbiont-mediated transformation of host cell"/>
    <property type="evidence" value="ECO:0007669"/>
    <property type="project" value="InterPro"/>
</dbReference>
<dbReference type="GO" id="GO:0019079">
    <property type="term" value="P:viral genome replication"/>
    <property type="evidence" value="ECO:0000270"/>
    <property type="project" value="DisProt"/>
</dbReference>
<dbReference type="GO" id="GO:0039694">
    <property type="term" value="P:viral RNA genome replication"/>
    <property type="evidence" value="ECO:0000315"/>
    <property type="project" value="CAFA"/>
</dbReference>
<dbReference type="GO" id="GO:0019062">
    <property type="term" value="P:virion attachment to host cell"/>
    <property type="evidence" value="ECO:0007669"/>
    <property type="project" value="UniProtKB-KW"/>
</dbReference>
<dbReference type="CDD" id="cd17931">
    <property type="entry name" value="DEXHc_viral_Ns3"/>
    <property type="match status" value="1"/>
</dbReference>
<dbReference type="CDD" id="cd20903">
    <property type="entry name" value="HCV_p7"/>
    <property type="match status" value="1"/>
</dbReference>
<dbReference type="CDD" id="cd23202">
    <property type="entry name" value="Hepacivirus_RdRp"/>
    <property type="match status" value="1"/>
</dbReference>
<dbReference type="FunFam" id="1.10.820.10:FF:000001">
    <property type="entry name" value="Genome polyprotein"/>
    <property type="match status" value="1"/>
</dbReference>
<dbReference type="FunFam" id="1.20.1280.150:FF:000001">
    <property type="entry name" value="Genome polyprotein"/>
    <property type="match status" value="1"/>
</dbReference>
<dbReference type="FunFam" id="2.20.25.210:FF:000001">
    <property type="entry name" value="Genome polyprotein"/>
    <property type="match status" value="1"/>
</dbReference>
<dbReference type="FunFam" id="2.20.25.220:FF:000001">
    <property type="entry name" value="Genome polyprotein"/>
    <property type="match status" value="1"/>
</dbReference>
<dbReference type="FunFam" id="2.40.10.10:FF:000029">
    <property type="entry name" value="Genome polyprotein"/>
    <property type="match status" value="1"/>
</dbReference>
<dbReference type="FunFam" id="2.40.10.120:FF:000003">
    <property type="entry name" value="Genome polyprotein"/>
    <property type="match status" value="1"/>
</dbReference>
<dbReference type="FunFam" id="3.30.160.890:FF:000001">
    <property type="entry name" value="Genome polyprotein"/>
    <property type="match status" value="1"/>
</dbReference>
<dbReference type="FunFam" id="3.30.70.270:FF:000015">
    <property type="entry name" value="Genome polyprotein"/>
    <property type="match status" value="1"/>
</dbReference>
<dbReference type="FunFam" id="3.40.50.300:FF:000557">
    <property type="entry name" value="Genome polyprotein"/>
    <property type="match status" value="1"/>
</dbReference>
<dbReference type="FunFam" id="3.40.50.300:FF:000717">
    <property type="entry name" value="Genome polyprotein"/>
    <property type="match status" value="1"/>
</dbReference>
<dbReference type="FunFam" id="4.10.710.10:FF:000001">
    <property type="entry name" value="Genome polyprotein"/>
    <property type="match status" value="1"/>
</dbReference>
<dbReference type="Gene3D" id="2.40.10.120">
    <property type="match status" value="1"/>
</dbReference>
<dbReference type="Gene3D" id="3.30.70.270">
    <property type="match status" value="2"/>
</dbReference>
<dbReference type="Gene3D" id="6.10.250.1610">
    <property type="match status" value="1"/>
</dbReference>
<dbReference type="Gene3D" id="6.10.250.1750">
    <property type="match status" value="1"/>
</dbReference>
<dbReference type="Gene3D" id="6.10.250.2920">
    <property type="match status" value="1"/>
</dbReference>
<dbReference type="Gene3D" id="2.20.25.210">
    <property type="entry name" value="Hepatitis C NS5A, domain 1B"/>
    <property type="match status" value="1"/>
</dbReference>
<dbReference type="Gene3D" id="4.10.710.10">
    <property type="entry name" value="Hepatitis C Virus Capsid Protein, Chain A"/>
    <property type="match status" value="1"/>
</dbReference>
<dbReference type="Gene3D" id="3.30.160.890">
    <property type="entry name" value="Hepatitis C virus envelope glycoprotein E1, chain C"/>
    <property type="match status" value="1"/>
</dbReference>
<dbReference type="Gene3D" id="2.30.30.710">
    <property type="entry name" value="Hepatitis C virus non-structural protein NS2, C-terminal domain"/>
    <property type="match status" value="1"/>
</dbReference>
<dbReference type="Gene3D" id="1.20.1280.150">
    <property type="entry name" value="Hepatitis C virus non-structural protein NS2, N-terminal domain"/>
    <property type="match status" value="1"/>
</dbReference>
<dbReference type="Gene3D" id="2.20.25.220">
    <property type="entry name" value="Hepatitis C virus NS5A, 1B domain"/>
    <property type="match status" value="1"/>
</dbReference>
<dbReference type="Gene3D" id="3.40.50.300">
    <property type="entry name" value="P-loop containing nucleotide triphosphate hydrolases"/>
    <property type="match status" value="2"/>
</dbReference>
<dbReference type="Gene3D" id="1.10.820.10">
    <property type="entry name" value="RNA Helicase Chain A , domain 3"/>
    <property type="match status" value="1"/>
</dbReference>
<dbReference type="Gene3D" id="2.40.10.10">
    <property type="entry name" value="Trypsin-like serine proteases"/>
    <property type="match status" value="1"/>
</dbReference>
<dbReference type="InterPro" id="IPR043502">
    <property type="entry name" value="DNA/RNA_pol_sf"/>
</dbReference>
<dbReference type="InterPro" id="IPR011492">
    <property type="entry name" value="Flavi_DEAD"/>
</dbReference>
<dbReference type="InterPro" id="IPR002521">
    <property type="entry name" value="HCV_Core_C"/>
</dbReference>
<dbReference type="InterPro" id="IPR044896">
    <property type="entry name" value="HCV_core_chain_A"/>
</dbReference>
<dbReference type="InterPro" id="IPR002522">
    <property type="entry name" value="HCV_core_N"/>
</dbReference>
<dbReference type="InterPro" id="IPR002519">
    <property type="entry name" value="HCV_Env"/>
</dbReference>
<dbReference type="InterPro" id="IPR002531">
    <property type="entry name" value="HCV_NS1"/>
</dbReference>
<dbReference type="InterPro" id="IPR002518">
    <property type="entry name" value="HCV_NS2"/>
</dbReference>
<dbReference type="InterPro" id="IPR042205">
    <property type="entry name" value="HCV_NS2_C"/>
</dbReference>
<dbReference type="InterPro" id="IPR042209">
    <property type="entry name" value="HCV_NS2_N"/>
</dbReference>
<dbReference type="InterPro" id="IPR000745">
    <property type="entry name" value="HCV_NS4a"/>
</dbReference>
<dbReference type="InterPro" id="IPR001490">
    <property type="entry name" value="HCV_NS4b"/>
</dbReference>
<dbReference type="InterPro" id="IPR002868">
    <property type="entry name" value="HCV_NS5a"/>
</dbReference>
<dbReference type="InterPro" id="IPR013192">
    <property type="entry name" value="HCV_NS5A_1a"/>
</dbReference>
<dbReference type="InterPro" id="IPR013193">
    <property type="entry name" value="HCV_NS5a_1B_dom"/>
</dbReference>
<dbReference type="InterPro" id="IPR038568">
    <property type="entry name" value="HCV_NS5A_1B_sf"/>
</dbReference>
<dbReference type="InterPro" id="IPR024350">
    <property type="entry name" value="HCV_NS5a_C"/>
</dbReference>
<dbReference type="InterPro" id="IPR049913">
    <property type="entry name" value="HCV_p7"/>
</dbReference>
<dbReference type="InterPro" id="IPR014001">
    <property type="entry name" value="Helicase_ATP-bd"/>
</dbReference>
<dbReference type="InterPro" id="IPR001650">
    <property type="entry name" value="Helicase_C-like"/>
</dbReference>
<dbReference type="InterPro" id="IPR004109">
    <property type="entry name" value="HepC_NS3_protease"/>
</dbReference>
<dbReference type="InterPro" id="IPR054175">
    <property type="entry name" value="NS3_helicase_C"/>
</dbReference>
<dbReference type="InterPro" id="IPR038170">
    <property type="entry name" value="NS5A_1a_sf"/>
</dbReference>
<dbReference type="InterPro" id="IPR027417">
    <property type="entry name" value="P-loop_NTPase"/>
</dbReference>
<dbReference type="InterPro" id="IPR009003">
    <property type="entry name" value="Peptidase_S1_PA"/>
</dbReference>
<dbReference type="InterPro" id="IPR043504">
    <property type="entry name" value="Peptidase_S1_PA_chymotrypsin"/>
</dbReference>
<dbReference type="InterPro" id="IPR043128">
    <property type="entry name" value="Rev_trsase/Diguanyl_cyclase"/>
</dbReference>
<dbReference type="InterPro" id="IPR007094">
    <property type="entry name" value="RNA-dir_pol_PSvirus"/>
</dbReference>
<dbReference type="InterPro" id="IPR002166">
    <property type="entry name" value="RNA_pol_HCV"/>
</dbReference>
<dbReference type="Pfam" id="PF07652">
    <property type="entry name" value="Flavi_DEAD"/>
    <property type="match status" value="1"/>
</dbReference>
<dbReference type="Pfam" id="PF01543">
    <property type="entry name" value="HCV_capsid"/>
    <property type="match status" value="1"/>
</dbReference>
<dbReference type="Pfam" id="PF01542">
    <property type="entry name" value="HCV_core"/>
    <property type="match status" value="1"/>
</dbReference>
<dbReference type="Pfam" id="PF01539">
    <property type="entry name" value="HCV_env"/>
    <property type="match status" value="1"/>
</dbReference>
<dbReference type="Pfam" id="PF01560">
    <property type="entry name" value="HCV_NS1"/>
    <property type="match status" value="1"/>
</dbReference>
<dbReference type="Pfam" id="PF01538">
    <property type="entry name" value="HCV_NS2"/>
    <property type="match status" value="1"/>
</dbReference>
<dbReference type="Pfam" id="PF01006">
    <property type="entry name" value="HCV_NS4a"/>
    <property type="match status" value="1"/>
</dbReference>
<dbReference type="Pfam" id="PF01001">
    <property type="entry name" value="HCV_NS4b"/>
    <property type="match status" value="1"/>
</dbReference>
<dbReference type="Pfam" id="PF01506">
    <property type="entry name" value="HCV_NS5a"/>
    <property type="match status" value="1"/>
</dbReference>
<dbReference type="Pfam" id="PF08300">
    <property type="entry name" value="HCV_NS5a_1a"/>
    <property type="match status" value="1"/>
</dbReference>
<dbReference type="Pfam" id="PF08301">
    <property type="entry name" value="HCV_NS5a_1b"/>
    <property type="match status" value="1"/>
</dbReference>
<dbReference type="Pfam" id="PF12941">
    <property type="entry name" value="HCV_NS5a_C"/>
    <property type="match status" value="1"/>
</dbReference>
<dbReference type="Pfam" id="PF22027">
    <property type="entry name" value="NS3_helicase_C"/>
    <property type="match status" value="1"/>
</dbReference>
<dbReference type="Pfam" id="PF02907">
    <property type="entry name" value="Peptidase_S29"/>
    <property type="match status" value="1"/>
</dbReference>
<dbReference type="Pfam" id="PF00998">
    <property type="entry name" value="RdRP_3"/>
    <property type="match status" value="1"/>
</dbReference>
<dbReference type="SMART" id="SM00487">
    <property type="entry name" value="DEXDc"/>
    <property type="match status" value="1"/>
</dbReference>
<dbReference type="SUPFAM" id="SSF56672">
    <property type="entry name" value="DNA/RNA polymerases"/>
    <property type="match status" value="1"/>
</dbReference>
<dbReference type="SUPFAM" id="SSF52540">
    <property type="entry name" value="P-loop containing nucleoside triphosphate hydrolases"/>
    <property type="match status" value="2"/>
</dbReference>
<dbReference type="SUPFAM" id="SSF50494">
    <property type="entry name" value="Trypsin-like serine proteases"/>
    <property type="match status" value="1"/>
</dbReference>
<dbReference type="PROSITE" id="PS51693">
    <property type="entry name" value="HCV_NS2_PRO"/>
    <property type="match status" value="1"/>
</dbReference>
<dbReference type="PROSITE" id="PS51192">
    <property type="entry name" value="HELICASE_ATP_BIND_1"/>
    <property type="match status" value="1"/>
</dbReference>
<dbReference type="PROSITE" id="PS51194">
    <property type="entry name" value="HELICASE_CTER"/>
    <property type="match status" value="1"/>
</dbReference>
<dbReference type="PROSITE" id="PS51822">
    <property type="entry name" value="HV_PV_NS3_PRO"/>
    <property type="match status" value="1"/>
</dbReference>
<dbReference type="PROSITE" id="PS50507">
    <property type="entry name" value="RDRP_SSRNA_POS"/>
    <property type="match status" value="1"/>
</dbReference>
<proteinExistence type="evidence at protein level"/>
<comment type="function">
    <molecule>Mature core protein</molecule>
    <text evidence="3 5 6 7 12 31">Packages viral RNA to form a viral nucleocapsid, and promotes virion budding (Probable). Participates in the viral particle production as a result of its interaction with the non-structural protein 5A (By similarity). Binds RNA and may function as a RNA chaperone to induce the RNA structural rearrangements taking place during virus replication (By similarity). Modulates viral translation initiation by interacting with viral IRES and 40S ribosomal subunit (By similarity). Affects various cell signaling pathways, host immunity and lipid metabolism (Probable). Prevents the establishment of cellular antiviral state by blocking the interferon-alpha/beta (IFN-alpha/beta) and IFN-gamma signaling pathways and by blocking the formation of phosphorylated STAT1 and promoting ubiquitin-mediated proteasome-dependent degradation of STAT1 (By similarity). Activates STAT3 leading to cellular transformation (By similarity). Regulates the activity of cellular genes, including c-myc and c-fos (By similarity). May repress the promoter of p53, and sequester CREB3 and SP110 isoform 3/Sp110b in the cytoplasm (By similarity). Represses cell cycle negative regulating factor CDKN1A, thereby interrupting an important check point of normal cell cycle regulation (By similarity). Targets transcription factors involved in the regulation of inflammatory responses and in the immune response: suppresses NF-kappa-B activation, and activates AP-1 (By similarity). Binds to dendritic cells (DCs) via C1QR1, resulting in down-regulation of T-lymphocytes proliferation (By similarity). Alters lipid metabolism by interacting with hepatocellular proteins involved in lipid accumulation and storage (By similarity). Induces up-regulation of FAS promoter activity, and thereby contributes to the increased triglyceride accumulation in hepatocytes (steatosis) (By similarity).</text>
</comment>
<comment type="function">
    <molecule>Envelope glycoprotein E1</molecule>
    <text evidence="6">Forms a heterodimer with envelope glycoprotein E2, which mediates virus attachment to the host cell, virion internalization through clathrin-dependent endocytosis and fusion with host membrane (By similarity). Fusion with the host cell is most likely mediated by both E1 and E2, through conformational rearrangements of the heterodimer required for fusion rather than a classical class II fusion mechanism (By similarity). E1/E2 heterodimer binds host apolipoproteins such as APOB and APOE thereby forming a lipo-viro-particle (LVP) (By similarity). APOE associated to the LVP allows the initial virus attachment to cell surface receptors such as the heparan sulfate proteoglycans (HSPGs), syndecan-1 (SDC1), syndecan-1 (SDC2), the low-density lipoprotein receptor (LDLR) and scavenger receptor class B type I (SCARB1) (By similarity). The cholesterol transfer activity of SCARB1 allows E2 exposure and binding of E2 to SCARB1 and the tetraspanin CD81 (By similarity). E1/E2 heterodimer binding on CD81 activates the epithelial growth factor receptor (EGFR) signaling pathway (By similarity). Diffusion of the complex E1-E2-EGFR-SCARB1-CD81 to the cell lateral membrane allows further interaction with Claudin 1 (CLDN1) and occludin (OCLN) to finally trigger HCV entry (By similarity).</text>
</comment>
<comment type="function">
    <molecule>Envelope glycoprotein E2</molecule>
    <text evidence="5 6">Forms a heterodimer with envelope glycoprotein E1, which mediates virus attachment to the host cell, virion internalization through clathrin-dependent endocytosis and fusion with host membrane (By similarity). Fusion with the host cell is most likely mediated by both E1 and E2, through conformational rearrangements of the heterodimer required for fusion rather than a classical class II fusion mechanism (By similarity). The interaction between envelope glycoprotein E2 and host apolipoprotein E/APOE allows the proper assembly, maturation and infectivity of the viral particles (By similarity). This interaction is probably promoted via the up-regulation of cellular autophagy by the virus (By similarity). E1/E2 heterodimer binds host apolipoproteins such as APOB and APOE thereby forming a lipo-viro-particle (LVP) (By similarity). APOE associated to the LVP allows the initial virus attachment to cell surface receptors such as the heparan sulfate proteoglycans (HSPGs), syndecan-1 (SDC1), syndecan-1 (SDC2), the low-density lipoprotein receptor (LDLR) and scavenger receptor class B type I (SCARB1) (By similarity). The cholesterol transfer activity of SCARB1 allows E2 exposure and binding of E2 to SCARB1 and the tetraspanin CD81 (By similarity). E1/E2 heterodimer binding on CD81 activates the epithelial growth factor receptor (EGFR) signaling pathway (By similarity). Diffusion of the complex E1-E2-EGFR-SCARB1-CD81 to the cell lateral membrane allows further interaction with Claudin 1 (CLDN1) and occludin (OCLN) to finally trigger HCV entry (By similarity). Inhibits host EIF2AK2/PKR activation, preventing the establishment of an antiviral state (By similarity). Viral ligand for CD209/DC-SIGN and CLEC4M/DC-SIGNR, which are respectively found on dendritic cells (DCs), and on liver sinusoidal endothelial cells and macrophage-like cells of lymph node sinuses (By similarity). These interactions allow the capture of circulating HCV particles by these cells and subsequent facilitated transmission to permissive cells such as hepatocytes and lymphocyte subpopulations (By similarity). The interaction between E2 and host amino acid transporter complex formed by SLC3A2 and SLC7A5/LAT1 may facilitate viral entry into host cell (By similarity).</text>
</comment>
<comment type="function">
    <molecule>Viroporin p7</molecule>
    <text evidence="6 12 31">Ion channel protein that acts as a viroporin and plays an essential role in the assembly, envelopment and secretion of viral particles (By similarity). Regulates the host cell secretory pathway, which induces the intracellular retention of viral glycoproteins and favors assembly of viral particles (By similarity). Creates a pore in acidic organelles and releases Ca(2+) and H(+) in the cytoplasm of infected cells, leading to a productive viral infection (By similarity). High levels of cytoplasmic Ca(2+) may trigger membrane trafficking and transport of viral ER-associated proteins to viroplasms, sites of viral genome replication (Probable). This ionic imbalance induces the assembly of the inflammasome complex, which triggers the maturation of pro-IL-1beta into IL-1beta through the action of caspase-1 (By similarity). Targets also host mitochondria and induces mitochondrial depolarization (By similarity). In addition of its role as a viroporin, acts as a lipid raft adhesion factor (By similarity).</text>
</comment>
<comment type="function">
    <molecule>Protease NS2</molecule>
    <text evidence="4 6 26">Cysteine protease required for the proteolytic auto-cleavage between the non-structural proteins NS2 and NS3 (By similarity). The N-terminus of NS3 is required for the function of NS2 protease (active region NS2-3) (By similarity). Promotes the initiation of viral particle assembly by mediating the interaction between structural and non-structural proteins (PubMed:21187906).</text>
</comment>
<comment type="function">
    <molecule>Serine protease/helicase NS3</molecule>
    <text evidence="6 19 22 29">Displays three enzymatic activities: serine protease with a chymotrypsin-like fold, NTPase and RNA helicase (By similarity) (PubMed:27226535). NS3 serine protease, in association with NS4A, is responsible for the cleavages of NS3-NS4A, NS4A-NS4B, NS4B-NS5A and NS5A-NS5B (By similarity). The NS3/NS4A complex prevents phosphorylation of host IRF3, thus preventing the establishment of dsRNA induced antiviral state (PubMed:12702807). The NS3/NS4A complex induces host amino acid transporter component SLC3A2, thus contributing to HCV propagation (By similarity). NS3 RNA helicase binds to RNA and unwinds both dsDNA and dsRNA in the 3' to 5' direction, and likely resolves RNA complicated stable secondary structures in the template strand (PubMed:27226535). Binds a single ATP and catalyzes the unzipping of a single base pair of dsRNA (By similarity). Inhibits host antiviral proteins TBK1 and IRF3 thereby preventing the establishment of an antiviral state (PubMed:15841462). Cleaves host MAVS/CARDIF thereby preventing the establishment of an antiviral state (By similarity). Cleaves host TICAM1/TRIF, thereby disrupting TLR3 signaling and preventing the establishment of an antiviral state (By similarity).</text>
</comment>
<comment type="function">
    <molecule>Non-structural protein 4A</molecule>
    <text evidence="6 19">Peptide cofactor which forms a non-covalent complex with the N-terminal of NS3 serine protease (By similarity). The NS3/NS4A complex prevents phosphorylation of host IRF3, thus preventing the establishment of dsRNA induced antiviral state (PubMed:12702807). The NS3/NS4A complex induces host amino acid transporter component SLC3A2, thus contributing to HCV propagation (By similarity).</text>
</comment>
<comment type="function">
    <molecule>Non-structural protein 4B</molecule>
    <text evidence="6">Induces a specific membrane alteration that serves as a scaffold for the virus replication complex (By similarity). This membrane alteration gives rise to the so-called ER-derived membranous web that contains the replication complex (By similarity). NS4B self-interaction contributes to its function in membranous web formation (By similarity). Promotes host TRIF protein degradation in a CASP8-dependent manner thereby inhibiting host TLR3-mediated interferon signaling (By similarity). Disrupts the interaction between STING and TBK1 contributing to the inhibition of interferon signaling (By similarity).</text>
</comment>
<comment type="function">
    <molecule>Non-structural protein 5A</molecule>
    <text evidence="3 5 6 12 20">Phosphorylated protein that is indispensable for viral replication and assembly (By similarity). Both hypo- and hyperphosphorylated states are required for the viral life cycle (By similarity). The hyperphosphorylated form of NS5A is an inhibitor of viral replication (PubMed:15542681). Involved in RNA-binding and especially in binding to the viral genome (By similarity). Zinc is essential for RNA-binding (By similarity). Participates in the viral particle production as a result of its interaction with the viral mature core protein (By similarity). Its interaction with host VAPB may target the viral replication complex to vesicles. Down-regulates viral IRES translation initiation (By similarity). Mediates interferon resistance, presumably by interacting with and inhibiting host EIF2AK2/PKR (By similarity). Prevents BIN1-induced apoptosis (By similarity). Acts as a transcriptional activator of some host genes important for viral replication when localized in the nucleus (By similarity). Via the interaction with host PACSIN2, modulates lipid droplet formation in order to promote virion assembly (By similarity). Modulates TNFRSF21/DR6 signaling pathway for viral propagation (By similarity).</text>
</comment>
<comment type="function">
    <molecule>RNA-directed RNA polymerase</molecule>
    <text evidence="6">RNA-dependent RNA polymerase that performs primer-template recognition and RNA synthesis during viral replication. Initiates RNA transcription/replication at a flavin adenine dinucleotide (FAD), resulting in a 5'- FAD cap on viral RNAs. In this way, recognition of viral 5' RNA by host pattern recognition receptors can be bypassed, thereby evading activation of antiviral pathways.</text>
</comment>
<comment type="catalytic activity">
    <molecule>Serine protease/helicase NS3</molecule>
    <reaction evidence="6">
        <text>Hydrolysis of four peptide bonds in the viral precursor polyprotein, commonly with Asp or Glu in the P6 position, Cys or Thr in P1 and Ser or Ala in P1'.</text>
        <dbReference type="EC" id="3.4.21.98"/>
    </reaction>
</comment>
<comment type="catalytic activity">
    <molecule>Serine protease/helicase NS3</molecule>
    <reaction evidence="29">
        <text>a ribonucleoside 5'-triphosphate + H2O = a ribonucleoside 5'-diphosphate + phosphate + H(+)</text>
        <dbReference type="Rhea" id="RHEA:23680"/>
        <dbReference type="ChEBI" id="CHEBI:15377"/>
        <dbReference type="ChEBI" id="CHEBI:15378"/>
        <dbReference type="ChEBI" id="CHEBI:43474"/>
        <dbReference type="ChEBI" id="CHEBI:57930"/>
        <dbReference type="ChEBI" id="CHEBI:61557"/>
        <dbReference type="EC" id="3.6.1.15"/>
    </reaction>
</comment>
<comment type="catalytic activity">
    <molecule>Serine protease/helicase NS3</molecule>
    <reaction evidence="29">
        <text>ATP + H2O = ADP + phosphate + H(+)</text>
        <dbReference type="Rhea" id="RHEA:13065"/>
        <dbReference type="ChEBI" id="CHEBI:15377"/>
        <dbReference type="ChEBI" id="CHEBI:15378"/>
        <dbReference type="ChEBI" id="CHEBI:30616"/>
        <dbReference type="ChEBI" id="CHEBI:43474"/>
        <dbReference type="ChEBI" id="CHEBI:456216"/>
        <dbReference type="EC" id="3.6.4.13"/>
    </reaction>
</comment>
<comment type="catalytic activity">
    <molecule>RNA-directed RNA polymerase</molecule>
    <reaction evidence="14">
        <text>RNA(n) + a ribonucleoside 5'-triphosphate = RNA(n+1) + diphosphate</text>
        <dbReference type="Rhea" id="RHEA:21248"/>
        <dbReference type="Rhea" id="RHEA-COMP:14527"/>
        <dbReference type="Rhea" id="RHEA-COMP:17342"/>
        <dbReference type="ChEBI" id="CHEBI:33019"/>
        <dbReference type="ChEBI" id="CHEBI:61557"/>
        <dbReference type="ChEBI" id="CHEBI:140395"/>
        <dbReference type="EC" id="2.7.7.48"/>
    </reaction>
</comment>
<comment type="cofactor">
    <molecule>Protease NS2</molecule>
    <cofactor evidence="4">
        <name>Zn(2+)</name>
        <dbReference type="ChEBI" id="CHEBI:29105"/>
    </cofactor>
    <text evidence="4">Activity of protease NS2 is dependent on zinc ions and completely inhibited by EDTA. This is probably due to the fact that NS2 protease activity needs NS3 N-terminus that binds a zinc atom (active region NS2-3).</text>
</comment>
<comment type="cofactor">
    <molecule>Serine protease/helicase NS3</molecule>
    <cofactor evidence="4">
        <name>Zn(2+)</name>
        <dbReference type="ChEBI" id="CHEBI:29105"/>
    </cofactor>
    <cofactor evidence="25">
        <name>Mg(2+)</name>
        <dbReference type="ChEBI" id="CHEBI:18420"/>
    </cofactor>
    <text evidence="4 25">Binds 1 zinc ion which has a structural role (By similarity). The magnesium ion is essential for the helicase activity (PubMed:20080715).</text>
</comment>
<comment type="cofactor">
    <molecule>RNA-directed RNA polymerase</molecule>
    <cofactor evidence="4">
        <name>Mg(2+)</name>
        <dbReference type="ChEBI" id="CHEBI:18420"/>
    </cofactor>
    <text evidence="4">Binds 2 magnesium ion that constitute a dinuclear catalytic metal center.</text>
</comment>
<comment type="activity regulation">
    <text evidence="3 6">Inhibited by the antiviral drug hexamethylene amiloride (By similarity). Inhibition by amantadine appears to be genotype-dependent (By similarity). Also inhibited by long-alkyl-chain iminosugar derivatives (By similarity).</text>
</comment>
<comment type="activity regulation">
    <molecule>RNA-directed RNA polymerase</molecule>
    <text evidence="6">Activity is up-regulated by PRK2/PKN2-mediated phosphorylation.</text>
</comment>
<comment type="subunit">
    <molecule>Mature core protein</molecule>
    <text evidence="3 6 7 9 10 12">Homooligomer (By similarity). Interacts with E1 (via C-terminus) (By similarity). Interacts with the non-structural protein 5A (By similarity). Interacts (via N-terminus) with host STAT1 (via SH2 domain); this interaction results in decreased STAT1 phosphorylation and ubiquitin-mediated proteasome-dependent STAT1 degradation, leading to decreased IFN-stimulated gene transcription (By similarity). Interacts with host STAT3; this interaction constitutively activates STAT3 (By similarity). Interacts with host LTBR receptor (By similarity). Interacts with host TNFRSF1A receptor and possibly induces apoptosis (By similarity). Interacts with host HNRPK (By similarity). Interacts with host YWHAE (By similarity). Interacts with host UBE3A/E6AP (By similarity). Interacts with host DDX3X (By similarity). Interacts with host APOA2 (By similarity). Interacts with host RXRA protein (By similarity). Interacts with host SP110 isoform 3/Sp110b; this interaction sequesters the transcriptional corepressor SP110 away from the nucleus (By similarity). Interacts with host CREB3 nuclear transcription protein; this interaction triggers cell transformation (By similarity). Interacts with host ACY3 (By similarity). Interacts with host C1QR1 (By similarity). Interacts with host RBM24; this interaction, which enhances the interaction of the mature core protein with 5'-UTR, may inhibit viral translation and favor replication (By similarity). Interacts with host EIF2AK2/PKR; this interaction induces the autophosphorylation of EIF2AK2 (By similarity). Part of the viral assembly initiation complex composed of NS2, E1, E2, NS3, NS4A, NS5A and the mature core protein (By similarity).</text>
</comment>
<comment type="subunit">
    <molecule>Envelope glycoprotein E1</molecule>
    <text evidence="6 12 27">Forms a heterodimer with envelope glycoprotein E2 (By similarity). Interacts with mature core protein (By similarity). Interacts with protease NS2 (By similarity). The heterodimer E1/E2 interacts with host CLDN1; this interaction plays a role in viral entry into host cell (By similarity). Interacts with host SPSB2 (via C-terminus) (By similarity). Part of the viral assembly initiation complex composed of NS2, E1, E2, NS3, NS4A, NS5A and the mature core protein (By similarity). Interacts with human PLSCR1 (PubMed:21806988). Interacts with host NEURL3; this interaction prevents E1 binding to glycoprotein E2 (By similarity).</text>
</comment>
<comment type="subunit">
    <molecule>Envelope glycoprotein E2</molecule>
    <text evidence="6 12 27">Forms a heterodimer with envelope glycoprotein E1 (By similarity). Interacts with host CD81 and SCARB1 receptors; these interactions play a role in viral entry into host cell (By similarity). Interacts with host EIF2AK2/PKR; this interaction inhibits EIF2AK2 and probably allows the virus to evade the innate immune response (By similarity). Interacts with host CD209/DC-SIGN and CLEC4M/DC-SIGNR (By similarity). Interact with host SPCS1; this interaction is essential for viral particle assembly (By similarity). Interacts with protease NS2 (By similarity). The heterodimer E1/E2 interacts with host CLDN1; this interaction plays a role in viral entry into host cell (By similarity). Part of the viral assembly initiation complex composed of NS2, E1, E2, NS3, NS4A, NS5A and the mature core protein (By similarity). Interacts with host SLC3A2/4F2hc; the interaction may facilitate viral entry into host cell (By similarity). Interacts with human PLSCR1 (PubMed:21806988).</text>
</comment>
<comment type="subunit">
    <molecule>Viroporin p7</molecule>
    <text evidence="2 6 12">Homohexamer (By similarity). Homoheptamer (By similarity). Interacts with protease NS2 (By similarity).</text>
</comment>
<comment type="subunit">
    <molecule>Protease NS2</molecule>
    <text evidence="6 12">Homodimer (By similarity). Interacts with host SPCS1; this interaction is essential for viral particle assembly (By similarity). Interacts with envelope glycoprotein E1 (By similarity). Interacts with envelope glycoprotein E2 (By similarity). Interacts with viroporin p7 (By similarity). Interacts with serine protease/helicase NS3 (By similarity). Part of the replication complex composed of NS2, NS3, NS4A, NS4B, NS5A and the RNA-directed RNA polymerase embedded in an ER-derived membranous web (By similarity). Part of the viral assembly initiation complex composed of NS2, E1, E2, NS3, NS4A, NS5A and the mature core protein (By similarity).</text>
</comment>
<comment type="subunit">
    <molecule>Serine protease/helicase NS3</molecule>
    <text evidence="4 6 12 19 22">Interacts with protease NS2 (By similarity). Interacts with non-structural protein 4A; this interaction stabilizes the folding of NS3 serine protease (By similarity). NS3-NS4A interaction is essential for NS3 activation and allows membrane anchorage of the latter (By similarity). NS3/NS4A complex also prevents phosphorylation of host IRF3, thus preventing the establishment of dsRNA induced antiviral state (PubMed:12702807). Interacts with host MAVS; this interaction leads to the cleavage and inhibition of host MAVS (By similarity). Interacts with host TICAM1; this interaction leads to the cleavage and inhibition of host TICAM1 (By similarity). Interacts with host TANK-binding kinase/TBK1; this interaction results in the inhibition of the association between TBK1 and IRF3, which leads to the inhibition of IRF3 activation (PubMed:15841462). Interacts with host RBM24 (By similarity). Part of the replication complex composed of NS2, NS3, NS4A, NS4B, NS5A and the RNA-directed RNA polymerase embedded in an ER-derived membranous web (By similarity). Part of the viral assembly initiation complex composed of NS2, E1, E2, NS3, NS4A, NS5A and the mature core protein (By similarity).</text>
</comment>
<comment type="subunit">
    <molecule>Non-structural protein 5A</molecule>
    <text evidence="3 4 5 6 12">Monomer (By similarity). Homodimer; dimerization is required for RNA-binding (By similarity). Interacts with the mature core protein (By similarity). Interacts with host GRB2 (By similarity). Interacts with host BIN1 (By similarity). Interacts with host PIK3R1 (By similarity). Interacts with host SRCAP (By similarity). Interacts with host FKBP8 (By similarity). Interacts with host VAPB (By similarity). Interacts with host EIF2AK2/PKR; this interaction leads to disruption of EIF2AK2 dimerization by NS5A and probably allows the virus to evade the innate immune response (By similarity). Interacts (via N-terminus) with host PACSIN2 (via N-terminus); this interaction attenuates protein kinase C alpha-mediated phosphorylation of PACSIN2 by disrupting the interaction between PACSIN2 and PRKCA (By similarity). Interacts (via N-terminus) with host SRC kinase (via SH2 domain) (By similarity). Interacts with most Src-family kinases (By similarity). Interacts with host IFI27 and SKP2; promotes the ubiquitin-mediated proteasomal degradation of NS5A (By similarity). Interacts (via N-terminus) with non-structural protein 4A (By similarity). Interacts with non-structural protein 4B (By similarity). Interacts with RNA-directed RNA polymerase (By similarity). Part of the replication complex composed of NS2, NS3, NS4A, NS4B, NS5A and the RNA-directed RNA polymerase embedded in an ER-derived membranous web (By similarity). Interacts with host GPS2 (By similarity). Interacts with host TNFRSF21; this interaction allows the modulation by the virus of JNK, p38 MAPK, STAT3, and Akt signaling pathways in a DR6-dependent manner (By similarity). Interacts (via N-terminus) with host CIDEB (via N-terminus); this interaction seems to regulate the association of HCV particles with APOE (By similarity). Interacts with host CHKA/Choline Kinase-alpha; CHKA bridges host PI4KA and NS5A and potentiates NS5A-stimulated PI4KA activity, which then facilitates the targeting of the ternary complex to the ER for viral replication (By similarity). Interacts with host SPSB2 (via C-terminus); this interaction targets NS5A for ubiquitination and degradation (By similarity). Part of the viral assembly initiation complex composed of NS2, E1, E2, NS3, NS4A, NS5A and the mature core protein (By similarity).</text>
</comment>
<comment type="interaction">
    <interactant intactId="EBI-710918">
        <id>Q9WMX2</id>
    </interactant>
    <interactant intactId="EBI-720048">
        <id>Q9UPT5</id>
        <label>EXOC7</label>
    </interactant>
    <organismsDiffer>true</organismsDiffer>
    <experiments>3</experiments>
</comment>
<comment type="interaction">
    <interactant intactId="EBI-710918">
        <id>Q9WMX2</id>
    </interactant>
    <interactant intactId="EBI-515315">
        <id>P06241</id>
        <label>FYN</label>
    </interactant>
    <organismsDiffer>true</organismsDiffer>
    <experiments>2</experiments>
</comment>
<comment type="interaction">
    <interactant intactId="EBI-710918">
        <id>Q9WMX2</id>
    </interactant>
    <interactant intactId="EBI-286758">
        <id>Q14974</id>
        <label>KPNB1</label>
    </interactant>
    <organismsDiffer>true</organismsDiffer>
    <experiments>2</experiments>
</comment>
<comment type="interaction">
    <interactant intactId="EBI-710918">
        <id>Q9WMX2</id>
    </interactant>
    <interactant intactId="EBI-79452">
        <id>P07948</id>
        <label>LYN</label>
    </interactant>
    <organismsDiffer>true</organismsDiffer>
    <experiments>3</experiments>
</comment>
<comment type="interaction">
    <interactant intactId="EBI-710918">
        <id>Q9WMX2</id>
    </interactant>
    <interactant intactId="EBI-709638">
        <id>P11586</id>
        <label>MTHFD1</label>
    </interactant>
    <organismsDiffer>true</organismsDiffer>
    <experiments>3</experiments>
</comment>
<comment type="interaction">
    <interactant intactId="EBI-710918">
        <id>Q9WMX2</id>
    </interactant>
    <interactant intactId="EBI-353408">
        <id>P14618</id>
        <label>PKM</label>
    </interactant>
    <organismsDiffer>true</organismsDiffer>
    <experiments>4</experiments>
</comment>
<comment type="interaction">
    <interactant intactId="EBI-710918">
        <id>Q9WMX2</id>
    </interactant>
    <interactant intactId="EBI-740019">
        <id>O15162</id>
        <label>PLSCR1</label>
    </interactant>
    <organismsDiffer>true</organismsDiffer>
    <experiments>8</experiments>
</comment>
<comment type="interaction">
    <interactant intactId="EBI-710918">
        <id>Q9WMX2</id>
    </interactant>
    <interactant intactId="EBI-372899">
        <id>Q13148</id>
        <label>TARDBP</label>
    </interactant>
    <organismsDiffer>true</organismsDiffer>
    <experiments>2</experiments>
</comment>
<comment type="interaction">
    <interactant intactId="EBI-710918">
        <id>Q9WMX2</id>
    </interactant>
    <interactant intactId="EBI-355867">
        <id>O14980</id>
        <label>XPO1</label>
    </interactant>
    <organismsDiffer>true</organismsDiffer>
    <experiments>3</experiments>
</comment>
<comment type="interaction">
    <interactant intactId="EBI-6863754">
        <id>PRO_0000037541</id>
    </interactant>
    <interactant intactId="EBI-353779">
        <id>O00571</id>
        <label>DDX3X</label>
    </interactant>
    <organismsDiffer>true</organismsDiffer>
    <experiments>4</experiments>
</comment>
<comment type="interaction">
    <interactant intactId="EBI-6863754">
        <id>PRO_0000037541</id>
    </interactant>
    <interactant intactId="EBI-2963255">
        <id>Q53GQ0</id>
        <label>HSD17B12</label>
    </interactant>
    <organismsDiffer>true</organismsDiffer>
    <experiments>2</experiments>
</comment>
<comment type="interaction">
    <interactant intactId="EBI-9028517">
        <id>PRO_0000037545</id>
    </interactant>
    <interactant intactId="EBI-721550">
        <id>P22736</id>
        <label>NR4A1</label>
    </interactant>
    <organismsDiffer>true</organismsDiffer>
    <experiments>2</experiments>
</comment>
<comment type="interaction">
    <interactant intactId="EBI-9028527">
        <id>PRO_0000037547</id>
    </interactant>
    <interactant intactId="EBI-713382">
        <id>O43504</id>
        <label>LAMTOR5</label>
    </interactant>
    <organismsDiffer>true</organismsDiffer>
    <experiments>2</experiments>
</comment>
<comment type="interaction">
    <interactant intactId="EBI-6863741">
        <id>PRO_0000037548</id>
    </interactant>
    <interactant intactId="EBI-1046765">
        <id>O14874</id>
        <label>BCKDK</label>
    </interactant>
    <organismsDiffer>true</organismsDiffer>
    <experiments>2</experiments>
</comment>
<comment type="interaction">
    <interactant intactId="EBI-6863741">
        <id>PRO_0000037548</id>
    </interactant>
    <interactant intactId="EBI-739580">
        <id>Q13137</id>
        <label>CALCOCO2</label>
    </interactant>
    <organismsDiffer>true</organismsDiffer>
    <experiments>3</experiments>
</comment>
<comment type="interaction">
    <interactant intactId="EBI-6863741">
        <id>PRO_0000037548</id>
    </interactant>
    <interactant intactId="EBI-2808308">
        <id>Q6P2H3</id>
        <label>CEP85</label>
    </interactant>
    <organismsDiffer>true</organismsDiffer>
    <experiments>2</experiments>
</comment>
<comment type="interaction">
    <interactant intactId="EBI-6863741">
        <id>PRO_0000037548</id>
    </interactant>
    <interactant intactId="EBI-301024">
        <id>Q9NRA8</id>
        <label>EIF4ENIF1</label>
    </interactant>
    <organismsDiffer>true</organismsDiffer>
    <experiments>3</experiments>
</comment>
<comment type="interaction">
    <interactant intactId="EBI-6863741">
        <id>PRO_0000037548</id>
    </interactant>
    <interactant intactId="EBI-350432">
        <id>P21333</id>
        <label>FLNA</label>
    </interactant>
    <organismsDiffer>true</organismsDiffer>
    <experiments>6</experiments>
</comment>
<comment type="interaction">
    <interactant intactId="EBI-6863741">
        <id>PRO_0000037548</id>
    </interactant>
    <interactant intactId="EBI-725515">
        <id>O43559</id>
        <label>FRS3</label>
    </interactant>
    <organismsDiffer>true</organismsDiffer>
    <experiments>3</experiments>
</comment>
<comment type="interaction">
    <interactant intactId="EBI-6863741">
        <id>PRO_0000037548</id>
    </interactant>
    <interactant intactId="EBI-714388">
        <id>P32456</id>
        <label>GBP2</label>
    </interactant>
    <organismsDiffer>true</organismsDiffer>
    <experiments>2</experiments>
</comment>
<comment type="interaction">
    <interactant intactId="EBI-6863741">
        <id>PRO_0000037548</id>
    </interactant>
    <interactant intactId="EBI-358383">
        <id>P52294</id>
        <label>KPNA1</label>
    </interactant>
    <organismsDiffer>true</organismsDiffer>
    <experiments>2</experiments>
</comment>
<comment type="interaction">
    <interactant intactId="EBI-6863741">
        <id>PRO_0000037548</id>
    </interactant>
    <interactant intactId="EBI-603300">
        <id>P28065</id>
        <label>PSMB9</label>
    </interactant>
    <organismsDiffer>true</organismsDiffer>
    <experiments>2</experiments>
</comment>
<comment type="interaction">
    <interactant intactId="EBI-6863741">
        <id>PRO_0000037548</id>
    </interactant>
    <interactant intactId="EBI-359444">
        <id>Q9UJF2</id>
        <label>RASAL2</label>
    </interactant>
    <organismsDiffer>true</organismsDiffer>
    <experiments>2</experiments>
</comment>
<comment type="interaction">
    <interactant intactId="EBI-6863741">
        <id>PRO_0000037548</id>
    </interactant>
    <interactant intactId="EBI-396727">
        <id>Q9HAU4</id>
        <label>SMURF2</label>
    </interactant>
    <organismsDiffer>true</organismsDiffer>
    <experiments>2</experiments>
</comment>
<comment type="interaction">
    <interactant intactId="EBI-6863741">
        <id>PRO_0000037548</id>
    </interactant>
    <interactant intactId="EBI-6874437">
        <id>PRO_0000037540</id>
        <dbReference type="UniProtKB" id="P26663"/>
    </interactant>
    <organismsDiffer>true</organismsDiffer>
    <experiments>5</experiments>
</comment>
<comment type="interaction">
    <interactant intactId="EBI-6863748">
        <id>PRO_0000037551</id>
    </interactant>
    <interactant intactId="EBI-719094">
        <id>O00499</id>
        <label>BIN1</label>
    </interactant>
    <organismsDiffer>true</organismsDiffer>
    <experiments>5</experiments>
</comment>
<comment type="interaction">
    <interactant intactId="EBI-6863748">
        <id>PRO_0000037551</id>
    </interactant>
    <interactant intactId="EBI-536772">
        <id>Q12805</id>
        <label>EFEMP1</label>
    </interactant>
    <organismsDiffer>true</organismsDiffer>
    <experiments>2</experiments>
</comment>
<comment type="interaction">
    <interactant intactId="EBI-6863748">
        <id>PRO_0000037551</id>
    </interactant>
    <interactant intactId="EBI-1174818">
        <id>Q9GZT9</id>
        <label>EGLN1</label>
    </interactant>
    <organismsDiffer>true</organismsDiffer>
    <experiments>3</experiments>
</comment>
<comment type="interaction">
    <interactant intactId="EBI-6863748">
        <id>PRO_0000037551</id>
    </interactant>
    <interactant intactId="EBI-744771">
        <id>O75344</id>
        <label>FKBP6</label>
    </interactant>
    <organismsDiffer>true</organismsDiffer>
    <experiments>6</experiments>
</comment>
<comment type="interaction">
    <interactant intactId="EBI-6863748">
        <id>PRO_0000037551</id>
    </interactant>
    <interactant intactId="EBI-724839">
        <id>Q14318</id>
        <label>FKBP8</label>
    </interactant>
    <organismsDiffer>true</organismsDiffer>
    <experiments>11</experiments>
</comment>
<comment type="interaction">
    <interactant intactId="EBI-6863748">
        <id>PRO_0000037551</id>
    </interactant>
    <interactant intactId="EBI-350432">
        <id>P21333</id>
        <label>FLNA</label>
    </interactant>
    <organismsDiffer>true</organismsDiffer>
    <experiments>6</experiments>
</comment>
<comment type="interaction">
    <interactant intactId="EBI-6863748">
        <id>PRO_0000037551</id>
    </interactant>
    <interactant intactId="EBI-618309">
        <id>Q08379</id>
        <label>GOLGA2</label>
    </interactant>
    <organismsDiffer>true</organismsDiffer>
    <experiments>2</experiments>
</comment>
<comment type="interaction">
    <interactant intactId="EBI-6863748">
        <id>PRO_0000037551</id>
    </interactant>
    <interactant intactId="EBI-713355">
        <id>Q13227</id>
        <label>GPS2</label>
    </interactant>
    <organismsDiffer>true</organismsDiffer>
    <experiments>2</experiments>
</comment>
<comment type="interaction">
    <interactant intactId="EBI-6863748">
        <id>PRO_0000037551</id>
    </interactant>
    <interactant intactId="EBI-359013">
        <id>Q9P035</id>
        <label>HACD3</label>
    </interactant>
    <organismsDiffer>true</organismsDiffer>
    <experiments>3</experiments>
</comment>
<comment type="interaction">
    <interactant intactId="EBI-6863748">
        <id>PRO_0000037551</id>
    </interactant>
    <interactant intactId="EBI-961214">
        <id>P20701</id>
        <label>ITGAL</label>
    </interactant>
    <organismsDiffer>true</organismsDiffer>
    <experiments>2</experiments>
</comment>
<comment type="interaction">
    <interactant intactId="EBI-6863748">
        <id>PRO_0000037551</id>
    </interactant>
    <interactant intactId="EBI-748229">
        <id>Q9H8S9</id>
        <label>MOB1A</label>
    </interactant>
    <organismsDiffer>true</organismsDiffer>
    <experiments>2</experiments>
</comment>
<comment type="interaction">
    <interactant intactId="EBI-6863748">
        <id>PRO_0000037551</id>
    </interactant>
    <interactant intactId="EBI-3911716">
        <id>Q9ULW6</id>
        <label>NAP1L2</label>
    </interactant>
    <organismsDiffer>true</organismsDiffer>
    <experiments>2</experiments>
</comment>
<comment type="interaction">
    <interactant intactId="EBI-6863748">
        <id>PRO_0000037551</id>
    </interactant>
    <interactant intactId="EBI-725795">
        <id>O60664</id>
        <label>PLIN3</label>
    </interactant>
    <organismsDiffer>true</organismsDiffer>
    <experiments>5</experiments>
</comment>
<comment type="interaction">
    <interactant intactId="EBI-6863748">
        <id>PRO_0000037551</id>
    </interactant>
    <interactant intactId="EBI-5550163">
        <id>Q8WUF5</id>
        <label>PPP1R13L</label>
    </interactant>
    <organismsDiffer>true</organismsDiffer>
    <experiments>2</experiments>
</comment>
<comment type="interaction">
    <interactant intactId="EBI-6863748">
        <id>PRO_0000037551</id>
    </interactant>
    <interactant intactId="EBI-603300">
        <id>P28065</id>
        <label>PSMB9</label>
    </interactant>
    <organismsDiffer>true</organismsDiffer>
    <experiments>2</experiments>
</comment>
<comment type="interaction">
    <interactant intactId="EBI-6863748">
        <id>PRO_0000037551</id>
    </interactant>
    <interactant intactId="EBI-311323">
        <id>O94875</id>
        <label>SORBS2</label>
    </interactant>
    <organismsDiffer>true</organismsDiffer>
    <experiments>2</experiments>
</comment>
<comment type="interaction">
    <interactant intactId="EBI-6863748">
        <id>PRO_0000037551</id>
    </interactant>
    <interactant intactId="EBI-749812">
        <id>Q6PKC3</id>
        <label>TXNDC11</label>
    </interactant>
    <organismsDiffer>true</organismsDiffer>
    <experiments>2</experiments>
</comment>
<comment type="interaction">
    <interactant intactId="EBI-6863748">
        <id>PRO_0000037551</id>
    </interactant>
    <interactant intactId="EBI-1059156">
        <id>Q9P0L0</id>
        <label>VAPA</label>
    </interactant>
    <organismsDiffer>true</organismsDiffer>
    <experiments>10</experiments>
</comment>
<comment type="interaction">
    <interactant intactId="EBI-6863748">
        <id>PRO_0000037551</id>
    </interactant>
    <interactant intactId="EBI-2799833">
        <id>Q8N1B4</id>
        <label>VPS52</label>
    </interactant>
    <organismsDiffer>true</organismsDiffer>
    <experiments>2</experiments>
</comment>
<comment type="interaction">
    <interactant intactId="EBI-9005440">
        <id>PRO_0000037552</id>
    </interactant>
    <interactant intactId="EBI-306914">
        <id>Q13451</id>
        <label>FKBP5</label>
    </interactant>
    <organismsDiffer>true</organismsDiffer>
    <experiments>4</experiments>
</comment>
<comment type="interaction">
    <interactant intactId="EBI-9005440">
        <id>PRO_0000037552</id>
    </interactant>
    <interactant intactId="EBI-359252">
        <id>P23284</id>
        <label>PPIB</label>
    </interactant>
    <organismsDiffer>true</organismsDiffer>
    <experiments>7</experiments>
</comment>
<comment type="interaction">
    <interactant intactId="EBI-9005440">
        <id>PRO_0000037552</id>
    </interactant>
    <interactant intactId="EBI-1211440">
        <id>P27105</id>
        <label>STOM</label>
    </interactant>
    <organismsDiffer>true</organismsDiffer>
    <experiments>3</experiments>
</comment>
<comment type="interaction">
    <interactant intactId="EBI-9005440">
        <id>PRO_0000037552</id>
    </interactant>
    <interactant intactId="EBI-1059156">
        <id>Q9P0L0</id>
        <label>VAPA</label>
    </interactant>
    <organismsDiffer>true</organismsDiffer>
    <experiments>4</experiments>
</comment>
<comment type="subcellular location">
    <molecule>Core protein precursor</molecule>
    <subcellularLocation>
        <location evidence="5">Host endoplasmic reticulum membrane</location>
        <topology evidence="13">Single-pass membrane protein</topology>
    </subcellularLocation>
    <subcellularLocation>
        <location evidence="5">Host mitochondrion membrane</location>
        <topology evidence="13">Single-pass type I membrane protein</topology>
    </subcellularLocation>
    <text>The C-terminal transmembrane domain of the core protein precursor contains an ER signal leading the nascent polyprotein to the ER membrane.</text>
</comment>
<comment type="subcellular location">
    <molecule>Mature core protein</molecule>
    <subcellularLocation>
        <location evidence="12">Virion</location>
    </subcellularLocation>
    <subcellularLocation>
        <location evidence="6">Host cytoplasm</location>
    </subcellularLocation>
    <subcellularLocation>
        <location evidence="3">Host nucleus</location>
    </subcellularLocation>
    <subcellularLocation>
        <location evidence="6">Host lipid droplet</location>
    </subcellularLocation>
    <text evidence="6">Only a minor proportion of core protein is present in the nucleus (By similarity). Probably present on the surface of lipid droplets (By similarity).</text>
</comment>
<comment type="subcellular location">
    <molecule>Envelope glycoprotein E1</molecule>
    <subcellularLocation>
        <location evidence="31">Virion membrane</location>
        <topology evidence="31">Single-pass type I membrane protein</topology>
    </subcellularLocation>
    <subcellularLocation>
        <location>Host endoplasmic reticulum membrane</location>
        <topology evidence="6">Single-pass type I membrane protein</topology>
    </subcellularLocation>
    <text evidence="6">The C-terminal transmembrane domain acts as a signal sequence and forms a hairpin structure before cleavage by host signal peptidase (By similarity). After cleavage, the membrane sequence is retained at the C-terminus of the protein, serving as ER membrane anchor (By similarity). A reorientation of the second hydrophobic stretch occurs after cleavage producing a single reoriented transmembrane domain (By similarity). These events explain the final topology of the protein (By similarity).</text>
</comment>
<comment type="subcellular location">
    <molecule>Envelope glycoprotein E2</molecule>
    <subcellularLocation>
        <location evidence="31">Virion membrane</location>
        <topology evidence="31">Single-pass type I membrane protein</topology>
    </subcellularLocation>
    <subcellularLocation>
        <location>Host endoplasmic reticulum membrane</location>
        <topology evidence="6">Single-pass type I membrane protein</topology>
    </subcellularLocation>
    <subcellularLocation>
        <location evidence="26">Host lipid droplet</location>
    </subcellularLocation>
    <text evidence="6">The C-terminal transmembrane domain acts as a signal sequence and forms a hairpin structure before cleavage by host signal peptidase (By similarity). After cleavage, the membrane sequence is retained at the C-terminus of the protein, serving as ER membrane anchor (By similarity). A reorientation of the second hydrophobic stretch occurs after cleavage producing a single reoriented transmembrane domain (By similarity). These events explain the final topology of the protein (By similarity).</text>
</comment>
<comment type="subcellular location">
    <molecule>Viroporin p7</molecule>
    <subcellularLocation>
        <location evidence="6">Host endoplasmic reticulum membrane</location>
        <topology evidence="6">Multi-pass membrane protein</topology>
    </subcellularLocation>
    <subcellularLocation>
        <location evidence="6">Host mitochondrion</location>
    </subcellularLocation>
    <subcellularLocation>
        <location evidence="6">Host cell membrane</location>
    </subcellularLocation>
    <text evidence="6">The C-terminus of p7 membrane domain acts as a signal sequence (By similarity). After cleavage by host signal peptidase, the membrane sequence is retained at the C-terminus of the protein, serving as ER membrane anchor (By similarity). ER retention of p7 is leaky and a small fraction reaches the plasma membrane (By similarity).</text>
</comment>
<comment type="subcellular location">
    <molecule>Protease NS2</molecule>
    <subcellularLocation>
        <location evidence="6">Host endoplasmic reticulum membrane</location>
        <topology evidence="6">Multi-pass membrane protein</topology>
    </subcellularLocation>
    <subcellularLocation>
        <location evidence="26">Host lipid droplet</location>
    </subcellularLocation>
    <text evidence="12">Probably present on the surface of lipid droplets.</text>
</comment>
<comment type="subcellular location">
    <molecule>Serine protease/helicase NS3</molecule>
    <subcellularLocation>
        <location evidence="31">Host endoplasmic reticulum membrane</location>
        <topology evidence="31">Peripheral membrane protein</topology>
    </subcellularLocation>
    <text evidence="31">NS3 is associated to the ER membrane through its binding to NS4A.</text>
</comment>
<comment type="subcellular location">
    <molecule>Non-structural protein 4A</molecule>
    <subcellularLocation>
        <location evidence="31">Host endoplasmic reticulum membrane</location>
        <topology evidence="31">Single-pass type I membrane protein</topology>
    </subcellularLocation>
    <text>Host membrane insertion occurs after processing by the NS3 protease.</text>
</comment>
<comment type="subcellular location">
    <molecule>Non-structural protein 4B</molecule>
    <subcellularLocation>
        <location evidence="6">Host endoplasmic reticulum membrane</location>
        <topology evidence="6">Multi-pass membrane protein</topology>
    </subcellularLocation>
    <text evidence="6">A reorientation of the N-terminus into the ER lumen occurs post-translationally.</text>
</comment>
<comment type="subcellular location">
    <molecule>Non-structural protein 5A</molecule>
    <subcellularLocation>
        <location evidence="6">Host endoplasmic reticulum membrane</location>
        <topology evidence="6">Peripheral membrane protein</topology>
    </subcellularLocation>
    <subcellularLocation>
        <location evidence="6">Host cytoplasm</location>
        <location evidence="6">Host perinuclear region</location>
    </subcellularLocation>
    <subcellularLocation>
        <location evidence="3">Host mitochondrion</location>
    </subcellularLocation>
    <subcellularLocation>
        <location evidence="6">Host cytoplasm</location>
    </subcellularLocation>
    <subcellularLocation>
        <location evidence="3">Host nucleus</location>
    </subcellularLocation>
    <subcellularLocation>
        <location evidence="26">Host lipid droplet</location>
    </subcellularLocation>
    <text evidence="3 6">Host membrane insertion occurs after processing by the NS3 protease (By similarity). Localizes at the surface of lipid droplets (By similarity).</text>
</comment>
<comment type="subcellular location">
    <molecule>RNA-directed RNA polymerase</molecule>
    <subcellularLocation>
        <location evidence="6">Host cytoplasm</location>
    </subcellularLocation>
    <subcellularLocation>
        <location>Host endoplasmic reticulum membrane</location>
        <topology evidence="6">Single-pass type IV membrane protein</topology>
    </subcellularLocation>
    <text evidence="6">Host membrane insertion occurs after processing by the NS3 protease.</text>
</comment>
<comment type="domain">
    <molecule>Envelope glycoprotein E1</molecule>
    <text evidence="6">The transmembrane regions of envelope E1 and E2 glycoproteins are involved in heterodimer formation, ER localization, and assembly of these proteins.</text>
</comment>
<comment type="domain">
    <molecule>Envelope glycoprotein E2</molecule>
    <text evidence="4 6">The transmembrane regions of envelope E1 and E2 glycoproteins are involved in heterodimer formation, ER localization, and assembly of these proteins (By similarity). Envelope E2 glycoprotein contain two highly variable regions called hypervariable region 1 and 2 (HVR1 and HVR2) (By similarity). E2 also contain two segments involved in CD81-binding (By similarity). HVR1 is implicated in the SCARB1-mediated cell entry and probably acts as a regulator of the association of particles with lipids (By similarity).</text>
</comment>
<comment type="domain">
    <molecule>Protease NS2</molecule>
    <text evidence="4">The N-terminus of NS3 is required for the catalytic activity of protease NS2 (By similarity). The minimal catalytic region includes the C-terminus of NS2 and the N-terminus NS3 protease domain (active region NS2-3) (By similarity).</text>
</comment>
<comment type="domain">
    <molecule>Serine protease/helicase NS3</molecule>
    <text evidence="3 6">The N-terminal one-third of serine protease/helicase NS3 contains the protease activity (By similarity). This region contains a zinc atom that does not belong to the active site, but may play a structural rather than a catalytic role (By similarity). This region is essential for the activity of protease NS2, maybe by contributing to the folding of the latter (By similarity). The NTPase/helicase activity is located in the twothirds C-terminus of NS3, this domain contains the NTPase and RNA-binding regions (By similarity).</text>
</comment>
<comment type="domain">
    <molecule>Non-structural protein 4B</molecule>
    <text evidence="12">Contains a glycine zipper region that critically contributes to the biogenesis of functional ER-derived replication organelles.</text>
</comment>
<comment type="domain">
    <molecule>Non-structural protein 5A</molecule>
    <text evidence="3 6">The N-terminus of NS5A acts as membrane anchor (By similarity). The central part of NS5A contains a variable region called interferon sensitivity determining region (ISDR) and seems to be intrinsically disordered and interacts with NS5B and host EIF2AK2 (By similarity). The C-terminus of NS5A contains a variable region called variable region 3 (V3) (By similarity). ISDR and V3 may be involved in sensitivity and/or resistance to IFN-alpha therapy (By similarity). The C-terminus contains a nuclear localization signal (By similarity). The SH3-binding domain is involved in the interaction with host BIN1, GRB2 and Src-family kinases (By similarity).</text>
</comment>
<comment type="PTM">
    <molecule>Genome polyprotein</molecule>
    <text evidence="4 5 6 12">Specific enzymatic cleavages in vivo yield mature proteins (By similarity). The structural proteins, core, E1, E2 and p7 are produced by proteolytic processing by host signal peptidases (By similarity). The core protein precursor is synthesized as a 23 kDa, which is retained in the ER membrane through the hydrophobic signal peptide (By similarity). Cleavage by the signal peptidase releases the 21 kDa mature core protein (By similarity). The cleavage of the core protein precursor occurs between aminoacids 176 and 188 but the exact cleavage site is not known (By similarity). Some degraded forms of the core protein appear as well during the course of infection (By similarity). The other proteins (p7, NS2, NS3, NS4A, NS4B, NS5A and NS5B) are cleaved by the viral proteases (By similarity). Autoprocessing between NS2 and NS3 is mediated by the NS2 cysteine protease catalytic domain and regulated by the NS3 N-terminal domain (By similarity).</text>
</comment>
<comment type="PTM">
    <molecule>Mature core protein</molecule>
    <text evidence="8">Phosphorylated by host PKC and PKA.</text>
</comment>
<comment type="PTM">
    <molecule>Mature core protein</molecule>
    <text evidence="9">Ubiquitinated; mediated by UBE3A and leading to core protein subsequent proteasomal degradation.</text>
</comment>
<comment type="PTM">
    <molecule>Envelope glycoprotein E1</molecule>
    <text evidence="6">Highly N-glycosylated.</text>
</comment>
<comment type="PTM">
    <molecule>Envelope glycoprotein E2</molecule>
    <text evidence="6">Highly N-glycosylated.</text>
</comment>
<comment type="PTM">
    <molecule>Protease NS2</molecule>
    <text evidence="6">Palmitoylation is required for NS2/3 autoprocessing and E2 recruitment to membranes.</text>
</comment>
<comment type="PTM">
    <molecule>Non-structural protein 4B</molecule>
    <text evidence="6">Palmitoylated. This modification may play a role in its polymerization or in protein-protein interactions.</text>
</comment>
<comment type="PTM">
    <molecule>Non-structural protein 5A</molecule>
    <text evidence="3">Cleaved by host caspases which are probably activated by the viral infection.</text>
</comment>
<comment type="PTM">
    <molecule>Non-structural protein 5A</molecule>
    <text evidence="6">Ubiquitinated (By similarity). Ubiquitination, most probably at Lys-2350, mediated by host IFI27 and SKP2 leads to proteasomal degradation, restricting viral infection (By similarity). Ubiquitination by host TRIM22 leads to interruption of viral replication (By similarity).</text>
</comment>
<comment type="PTM">
    <molecule>Non-structural protein 5A</molecule>
    <text evidence="3 4 21">Phosphorylated on serines in a basal form termed p56 (PubMed:15709040). p58 is a hyperphosphorylated form of p56 (PubMed:15709040). p56 and p58 coexist in the cell in roughly equivalent amounts (By similarity). Hyperphosphorylation is dependent on the presence of NS4A (By similarity). Host CSNK1A1/CKI-alpha or RPS6KB1 kinases may be responsible for NS5A phosphorylation (By similarity).</text>
</comment>
<comment type="PTM">
    <molecule>Non-structural protein 5A</molecule>
    <text evidence="12">Tyrosine phosphorylation is essential for the interaction with host SRC.</text>
</comment>
<comment type="PTM">
    <molecule>RNA-directed RNA polymerase</molecule>
    <text evidence="3">The N-terminus is phosphorylated by host PRK2/PKN2.</text>
</comment>
<comment type="miscellaneous">
    <text evidence="31">Viral particle assembly takes place at the surface of ER-derived membranes in close proximity to lipid droplets. NS2 associates with E1/E2 glycoproteins, NS3 and NS5A, which interacts with the viral RNA and core protein to promote genome encapsidation. The nucleocapsid buds at the ER membrane where E1/E2 glycoproteins are anchored and afterward associate with nascent lipid droplet to acquire APOE and APOC. Secretion of viral particles is probably regulated by viroporin p7.</text>
</comment>
<comment type="miscellaneous">
    <molecule>Non-structural protein 5A</molecule>
    <text evidence="31">Cell culture adaptation of the virus leads to mutations in NS5A, reducing its inhibitory effect on replication.</text>
</comment>
<comment type="miscellaneous">
    <molecule>Mature core protein</molecule>
    <text evidence="3">Exerts viral interference on hepatitis B virus when HCV and HBV coinfect the same cell, by suppressing HBV gene expression, RNA encapsidation and budding.</text>
</comment>
<comment type="miscellaneous">
    <molecule>Non-structural protein 5A</molecule>
    <text evidence="23 24">According to a report, there is a disulfide bond between Cys-2114 and Cys-2162 (PubMed:15902263). According to a second report, this disulfide bond is not present (PubMed:19244328).</text>
</comment>
<comment type="similarity">
    <text evidence="31">Belongs to the hepacivirus polyprotein family.</text>
</comment>
<comment type="caution">
    <text evidence="31">The core gene probably also codes for alternative reading frame proteins (ARFPs). Many functions depicted for the core protein might belong to the ARFPs.</text>
</comment>
<feature type="initiator methionine" description="Removed; by host" evidence="5">
    <location>
        <position position="1"/>
    </location>
</feature>
<feature type="chain" id="PRO_0000450853" description="Genome polyprotein">
    <location>
        <begin position="2"/>
        <end position="3010"/>
    </location>
</feature>
<feature type="chain" id="PRO_0000037541" description="Core protein precursor">
    <location>
        <begin position="2"/>
        <end position="191"/>
    </location>
</feature>
<feature type="chain" id="PRO_0000037542" description="Mature core protein">
    <location>
        <begin position="2"/>
        <end position="177"/>
    </location>
</feature>
<feature type="propeptide" id="PRO_0000037543" description="ER anchor for the core protein, removed in mature form by host signal peptidase" evidence="6">
    <location>
        <begin position="178"/>
        <end position="191"/>
    </location>
</feature>
<feature type="chain" id="PRO_0000037544" description="Envelope glycoprotein E1">
    <location>
        <begin position="192"/>
        <end position="383"/>
    </location>
</feature>
<feature type="chain" id="PRO_0000037545" description="Envelope glycoprotein E2">
    <location>
        <begin position="384"/>
        <end position="746"/>
    </location>
</feature>
<feature type="chain" id="PRO_0000037546" description="Viroporin p7">
    <location>
        <begin position="747"/>
        <end position="809"/>
    </location>
</feature>
<feature type="chain" id="PRO_0000037547" description="Protease NS2" evidence="16">
    <location>
        <begin position="810"/>
        <end position="1026"/>
    </location>
</feature>
<feature type="chain" id="PRO_0000037548" description="Serine protease/helicase NS3">
    <location>
        <begin position="1027"/>
        <end position="1657"/>
    </location>
</feature>
<feature type="chain" id="PRO_0000037549" description="Non-structural protein 4A">
    <location>
        <begin position="1658"/>
        <end position="1711"/>
    </location>
</feature>
<feature type="chain" id="PRO_0000037550" description="Non-structural protein 4B">
    <location>
        <begin position="1712"/>
        <end position="1972"/>
    </location>
</feature>
<feature type="chain" id="PRO_0000037551" description="Non-structural protein 5A">
    <location>
        <begin position="1973"/>
        <end position="2419"/>
    </location>
</feature>
<feature type="chain" id="PRO_0000037552" description="RNA-directed RNA polymerase">
    <location>
        <begin position="2420"/>
        <end position="3010"/>
    </location>
</feature>
<feature type="topological domain" description="Cytoplasmic" evidence="13">
    <location>
        <begin position="2"/>
        <end position="168"/>
    </location>
</feature>
<feature type="transmembrane region" description="Helical" evidence="13">
    <location>
        <begin position="169"/>
        <end position="189"/>
    </location>
</feature>
<feature type="topological domain" description="Lumenal" evidence="6">
    <location>
        <begin position="190"/>
        <end position="358"/>
    </location>
</feature>
<feature type="transmembrane region" description="Helical" evidence="6">
    <location>
        <begin position="359"/>
        <end position="379"/>
    </location>
</feature>
<feature type="topological domain" description="Lumenal" evidence="6">
    <location>
        <begin position="380"/>
        <end position="725"/>
    </location>
</feature>
<feature type="transmembrane region" description="Helical" evidence="6">
    <location>
        <begin position="726"/>
        <end position="746"/>
    </location>
</feature>
<feature type="topological domain" description="Lumenal" evidence="6">
    <location>
        <begin position="747"/>
        <end position="757"/>
    </location>
</feature>
<feature type="transmembrane region" description="Helical" evidence="6">
    <location>
        <begin position="758"/>
        <end position="778"/>
    </location>
</feature>
<feature type="topological domain" description="Cytoplasmic" evidence="6">
    <location>
        <begin position="779"/>
        <end position="781"/>
    </location>
</feature>
<feature type="transmembrane region" description="Helical" evidence="6">
    <location>
        <begin position="782"/>
        <end position="803"/>
    </location>
</feature>
<feature type="topological domain" description="Lumenal" evidence="6">
    <location>
        <begin position="804"/>
        <end position="813"/>
    </location>
</feature>
<feature type="transmembrane region" description="Helical" evidence="26">
    <location>
        <begin position="814"/>
        <end position="834"/>
    </location>
</feature>
<feature type="topological domain" description="Cytoplasmic" evidence="26">
    <location>
        <begin position="835"/>
        <end position="838"/>
    </location>
</feature>
<feature type="transmembrane region" description="Helical" evidence="26">
    <location>
        <begin position="839"/>
        <end position="859"/>
    </location>
</feature>
<feature type="topological domain" description="Lumenal" evidence="26">
    <location>
        <begin position="860"/>
        <end position="881"/>
    </location>
</feature>
<feature type="transmembrane region" description="Helical" evidence="26">
    <location>
        <begin position="882"/>
        <end position="902"/>
    </location>
</feature>
<feature type="topological domain" description="Cytoplasmic" evidence="26">
    <location>
        <begin position="903"/>
        <end position="1657"/>
    </location>
</feature>
<feature type="transmembrane region" description="Helical" evidence="13">
    <location>
        <begin position="1658"/>
        <end position="1678"/>
    </location>
</feature>
<feature type="topological domain" description="Cytoplasmic" evidence="13">
    <location>
        <begin position="1679"/>
        <end position="1805"/>
    </location>
</feature>
<feature type="transmembrane region" description="Helical" evidence="13">
    <location>
        <begin position="1806"/>
        <end position="1826"/>
    </location>
</feature>
<feature type="topological domain" description="Lumenal" evidence="13">
    <location>
        <begin position="1827"/>
        <end position="1828"/>
    </location>
</feature>
<feature type="transmembrane region" description="Helical" evidence="13">
    <location>
        <begin position="1829"/>
        <end position="1849"/>
    </location>
</feature>
<feature type="topological domain" description="Cytoplasmic" evidence="13">
    <location>
        <position position="1850"/>
    </location>
</feature>
<feature type="transmembrane region" description="Helical" evidence="13">
    <location>
        <begin position="1851"/>
        <end position="1871"/>
    </location>
</feature>
<feature type="topological domain" description="Lumenal" evidence="13">
    <location>
        <begin position="1872"/>
        <end position="1881"/>
    </location>
</feature>
<feature type="transmembrane region" description="Helical" evidence="13">
    <location>
        <begin position="1882"/>
        <end position="1902"/>
    </location>
</feature>
<feature type="topological domain" description="Cytoplasmic" evidence="13">
    <location>
        <begin position="1903"/>
        <end position="1972"/>
    </location>
</feature>
<feature type="intramembrane region" evidence="6">
    <location>
        <begin position="1973"/>
        <end position="2003"/>
    </location>
</feature>
<feature type="topological domain" description="Cytoplasmic" evidence="6">
    <location>
        <begin position="2004"/>
        <end position="2989"/>
    </location>
</feature>
<feature type="transmembrane region" description="Helical" evidence="6">
    <location>
        <begin position="2990"/>
        <end position="3010"/>
    </location>
</feature>
<feature type="domain" description="Peptidase C18" evidence="16">
    <location>
        <begin position="903"/>
        <end position="1026"/>
    </location>
</feature>
<feature type="domain" description="Peptidase S29" evidence="17">
    <location>
        <begin position="1027"/>
        <end position="1208"/>
    </location>
</feature>
<feature type="domain" description="Helicase ATP-binding" evidence="15">
    <location>
        <begin position="1217"/>
        <end position="1369"/>
    </location>
</feature>
<feature type="domain" description="RdRp catalytic" evidence="14">
    <location>
        <begin position="2633"/>
        <end position="2751"/>
    </location>
</feature>
<feature type="region of interest" description="Disordered" evidence="6">
    <location>
        <begin position="2"/>
        <end position="75"/>
    </location>
</feature>
<feature type="region of interest" description="Interaction with DDX3X" evidence="10">
    <location>
        <begin position="2"/>
        <end position="59"/>
    </location>
</feature>
<feature type="region of interest" description="Interaction with EIF2AK2/PKR" evidence="3">
    <location>
        <begin position="2"/>
        <end position="58"/>
    </location>
</feature>
<feature type="region of interest" description="Interaction with STAT1" evidence="3">
    <location>
        <begin position="2"/>
        <end position="23"/>
    </location>
</feature>
<feature type="region of interest" description="Important for endoplasmic reticulum and mitochondrial localization" evidence="3">
    <location>
        <begin position="112"/>
        <end position="152"/>
    </location>
</feature>
<feature type="region of interest" description="Interaction with APOA2" evidence="7">
    <location>
        <begin position="122"/>
        <end position="173"/>
    </location>
</feature>
<feature type="region of interest" description="Important for lipid droplets localization" evidence="6">
    <location>
        <begin position="164"/>
        <end position="167"/>
    </location>
</feature>
<feature type="region of interest" description="Important for fusion" evidence="6">
    <location>
        <begin position="265"/>
        <end position="296"/>
    </location>
</feature>
<feature type="region of interest" description="HVR1" evidence="6">
    <location>
        <begin position="385"/>
        <end position="411"/>
    </location>
</feature>
<feature type="region of interest" description="HVR2" evidence="6">
    <location>
        <begin position="474"/>
        <end position="482"/>
    </location>
</feature>
<feature type="region of interest" description="CD81-binding 1" evidence="4">
    <location>
        <begin position="480"/>
        <end position="493"/>
    </location>
</feature>
<feature type="region of interest" description="CD81-binding 2" evidence="4">
    <location>
        <begin position="544"/>
        <end position="551"/>
    </location>
</feature>
<feature type="region of interest" description="EIF2AK2/eIF2-alpha phosphorylation homology domain (PePHD)">
    <location>
        <begin position="660"/>
        <end position="671"/>
    </location>
</feature>
<feature type="region of interest" description="Protease NS2-3" evidence="4">
    <location>
        <begin position="904"/>
        <end position="1206"/>
    </location>
</feature>
<feature type="region of interest" description="Interaction with host SCPS1" evidence="12">
    <location>
        <begin position="929"/>
        <end position="949"/>
    </location>
</feature>
<feature type="region of interest" description="RNA-binding" evidence="4">
    <location>
        <begin position="1486"/>
        <end position="1497"/>
    </location>
</feature>
<feature type="region of interest" description="NS3-binding" evidence="6">
    <location>
        <begin position="1679"/>
        <end position="1690"/>
    </location>
</feature>
<feature type="region of interest" description="Glycine zipper" evidence="12">
    <location>
        <begin position="1833"/>
        <end position="1861"/>
    </location>
</feature>
<feature type="region of interest" description="Membrane-binding" evidence="6">
    <location>
        <begin position="1978"/>
        <end position="1998"/>
    </location>
</feature>
<feature type="region of interest" description="RNA-binding" evidence="6">
    <location>
        <begin position="2005"/>
        <end position="2221"/>
    </location>
</feature>
<feature type="region of interest" description="Transcriptional activation" evidence="13">
    <location>
        <begin position="2120"/>
        <end position="2332"/>
    </location>
</feature>
<feature type="region of interest" description="FKBP8-binding" evidence="3">
    <location>
        <begin position="2120"/>
        <end position="2208"/>
    </location>
</feature>
<feature type="region of interest" description="Interaction with non-structural protein 4A" evidence="3">
    <location>
        <begin position="2135"/>
        <end position="2139"/>
    </location>
</feature>
<feature type="region of interest" description="Disordered" evidence="18">
    <location>
        <begin position="2187"/>
        <end position="2219"/>
    </location>
</feature>
<feature type="region of interest" description="Interaction with host SKP2" evidence="6">
    <location>
        <begin position="2189"/>
        <end position="2441"/>
    </location>
</feature>
<feature type="region of interest" description="ISDR" evidence="3">
    <location>
        <begin position="2206"/>
        <end position="2245"/>
    </location>
</feature>
<feature type="region of interest" description="EIF2AK2/PKR-binding" evidence="13">
    <location>
        <begin position="2210"/>
        <end position="2275"/>
    </location>
</feature>
<feature type="region of interest" description="ISDR" evidence="3">
    <location>
        <begin position="2210"/>
        <end position="2249"/>
    </location>
</feature>
<feature type="region of interest" description="NS4B-binding" evidence="13">
    <location>
        <begin position="2249"/>
        <end position="2306"/>
    </location>
</feature>
<feature type="region of interest" description="Interaction with host IFI27" evidence="6">
    <location>
        <begin position="2332"/>
        <end position="2441"/>
    </location>
</feature>
<feature type="region of interest" description="Disordered" evidence="18">
    <location>
        <begin position="2351"/>
        <end position="2407"/>
    </location>
</feature>
<feature type="region of interest" description="V3" evidence="1">
    <location>
        <begin position="2354"/>
        <end position="2377"/>
    </location>
</feature>
<feature type="short sequence motif" description="Nuclear localization signal" evidence="12">
    <location>
        <begin position="5"/>
        <end position="13"/>
    </location>
</feature>
<feature type="short sequence motif" description="Nuclear localization signal" evidence="12">
    <location>
        <begin position="38"/>
        <end position="43"/>
    </location>
</feature>
<feature type="short sequence motif" description="Nuclear localization signal" evidence="12">
    <location>
        <begin position="58"/>
        <end position="64"/>
    </location>
</feature>
<feature type="short sequence motif" description="Nuclear localization signal" evidence="12">
    <location>
        <begin position="66"/>
        <end position="71"/>
    </location>
</feature>
<feature type="short sequence motif" description="DECH box" evidence="12">
    <location>
        <begin position="1316"/>
        <end position="1319"/>
    </location>
</feature>
<feature type="short sequence motif" description="SH3-binding" evidence="13">
    <location>
        <begin position="2322"/>
        <end position="2325"/>
    </location>
</feature>
<feature type="short sequence motif" description="Nuclear localization signal" evidence="3">
    <location>
        <begin position="2326"/>
        <end position="2334"/>
    </location>
</feature>
<feature type="compositionally biased region" description="Basic residues" evidence="18">
    <location>
        <begin position="7"/>
        <end position="16"/>
    </location>
</feature>
<feature type="compositionally biased region" description="Low complexity" evidence="18">
    <location>
        <begin position="32"/>
        <end position="47"/>
    </location>
</feature>
<feature type="compositionally biased region" description="Low complexity" evidence="18">
    <location>
        <begin position="2194"/>
        <end position="2211"/>
    </location>
</feature>
<feature type="compositionally biased region" description="Polar residues" evidence="18">
    <location>
        <begin position="2351"/>
        <end position="2371"/>
    </location>
</feature>
<feature type="active site" description="For protease NS2 activity; shared with dimeric partner" evidence="16">
    <location>
        <position position="952"/>
    </location>
</feature>
<feature type="active site" description="For protease NS2 activity; shared with dimeric partner" evidence="16">
    <location>
        <position position="972"/>
    </location>
</feature>
<feature type="active site" description="For protease NS2 activity; shared with dimeric partner" evidence="16">
    <location>
        <position position="993"/>
    </location>
</feature>
<feature type="active site" description="Charge relay system; for serine protease NS3 activity" evidence="17">
    <location>
        <position position="1083"/>
    </location>
</feature>
<feature type="active site" description="Charge relay system; for serine protease NS3 activity" evidence="17">
    <location>
        <position position="1107"/>
    </location>
</feature>
<feature type="active site" description="Charge relay system; for serine protease NS3 activity" evidence="17">
    <location>
        <position position="1165"/>
    </location>
</feature>
<feature type="binding site" evidence="17 28">
    <location>
        <position position="1123"/>
    </location>
    <ligand>
        <name>Zn(2+)</name>
        <dbReference type="ChEBI" id="CHEBI:29105"/>
        <label>1</label>
        <note>structural; for NS3 protease activity and NS2/3 auto-cleavage activity</note>
    </ligand>
</feature>
<feature type="binding site" evidence="17 28">
    <location>
        <position position="1125"/>
    </location>
    <ligand>
        <name>Zn(2+)</name>
        <dbReference type="ChEBI" id="CHEBI:29105"/>
        <label>1</label>
        <note>structural; for NS3 protease activity and NS2/3 auto-cleavage activity</note>
    </ligand>
</feature>
<feature type="binding site" evidence="17 28">
    <location>
        <position position="1171"/>
    </location>
    <ligand>
        <name>Zn(2+)</name>
        <dbReference type="ChEBI" id="CHEBI:29105"/>
        <label>1</label>
        <note>structural; for NS3 protease activity and NS2/3 auto-cleavage activity</note>
    </ligand>
</feature>
<feature type="binding site" evidence="17">
    <location>
        <position position="1175"/>
    </location>
    <ligand>
        <name>Zn(2+)</name>
        <dbReference type="ChEBI" id="CHEBI:29105"/>
        <label>1</label>
        <note>structural; for NS3 protease activity and NS2/3 auto-cleavage activity</note>
    </ligand>
</feature>
<feature type="binding site" evidence="15">
    <location>
        <begin position="1230"/>
        <end position="1237"/>
    </location>
    <ligand>
        <name>ATP</name>
        <dbReference type="ChEBI" id="CHEBI:30616"/>
    </ligand>
</feature>
<feature type="binding site" evidence="32">
    <location>
        <position position="1237"/>
    </location>
    <ligand>
        <name>Mg(2+)</name>
        <dbReference type="ChEBI" id="CHEBI:18420"/>
        <label>1</label>
        <note>catalytic; for NS3 helicase activity</note>
    </ligand>
</feature>
<feature type="binding site" evidence="32">
    <location>
        <position position="1317"/>
    </location>
    <ligand>
        <name>Mg(2+)</name>
        <dbReference type="ChEBI" id="CHEBI:18420"/>
        <label>1</label>
        <note>catalytic; for NS3 helicase activity</note>
    </ligand>
</feature>
<feature type="binding site" evidence="23 24">
    <location>
        <position position="2011"/>
    </location>
    <ligand>
        <name>Zn(2+)</name>
        <dbReference type="ChEBI" id="CHEBI:29105"/>
        <label>2</label>
        <note>structural</note>
    </ligand>
</feature>
<feature type="binding site" evidence="23 24">
    <location>
        <position position="2029"/>
    </location>
    <ligand>
        <name>Zn(2+)</name>
        <dbReference type="ChEBI" id="CHEBI:29105"/>
        <label>2</label>
        <note>structural</note>
    </ligand>
</feature>
<feature type="binding site" evidence="23 24">
    <location>
        <position position="2031"/>
    </location>
    <ligand>
        <name>Zn(2+)</name>
        <dbReference type="ChEBI" id="CHEBI:29105"/>
        <label>2</label>
        <note>structural</note>
    </ligand>
</feature>
<feature type="binding site" evidence="23 24">
    <location>
        <position position="2052"/>
    </location>
    <ligand>
        <name>Zn(2+)</name>
        <dbReference type="ChEBI" id="CHEBI:29105"/>
        <label>2</label>
        <note>structural</note>
    </ligand>
</feature>
<feature type="binding site" evidence="4">
    <location>
        <position position="2639"/>
    </location>
    <ligand>
        <name>Mg(2+)</name>
        <dbReference type="ChEBI" id="CHEBI:18420"/>
        <label>2</label>
        <note>catalytic; for RNA-directed RNA polymerase activity</note>
    </ligand>
</feature>
<feature type="binding site" evidence="4">
    <location>
        <position position="2737"/>
    </location>
    <ligand>
        <name>Mg(2+)</name>
        <dbReference type="ChEBI" id="CHEBI:18420"/>
        <label>2</label>
        <note>catalytic; for RNA-directed RNA polymerase activity</note>
    </ligand>
</feature>
<feature type="binding site" evidence="4">
    <location>
        <position position="2738"/>
    </location>
    <ligand>
        <name>Mg(2+)</name>
        <dbReference type="ChEBI" id="CHEBI:18420"/>
        <label>2</label>
        <note>catalytic; for RNA-directed RNA polymerase activity</note>
    </ligand>
</feature>
<feature type="site" description="Cleavage; by host signal peptide peptidase" evidence="3">
    <location>
        <begin position="177"/>
        <end position="178"/>
    </location>
</feature>
<feature type="site" description="Cleavage; by host signal peptidase" evidence="3">
    <location>
        <begin position="191"/>
        <end position="192"/>
    </location>
</feature>
<feature type="site" description="Cleavage; by host signal peptidase" evidence="3">
    <location>
        <begin position="383"/>
        <end position="384"/>
    </location>
</feature>
<feature type="site" description="Cleavage; by host signal peptidase" evidence="1">
    <location>
        <begin position="746"/>
        <end position="747"/>
    </location>
</feature>
<feature type="site" description="Cleavage; by host signal peptidase" evidence="1">
    <location>
        <begin position="809"/>
        <end position="810"/>
    </location>
</feature>
<feature type="site" description="Cleavage; by protease NS2" evidence="16">
    <location>
        <begin position="1026"/>
        <end position="1027"/>
    </location>
</feature>
<feature type="site" description="Cleavage; by serine protease/helicase NS3" evidence="6">
    <location>
        <begin position="1657"/>
        <end position="1658"/>
    </location>
</feature>
<feature type="site" description="Cleavage; by serine protease/helicase NS3" evidence="6">
    <location>
        <begin position="1711"/>
        <end position="1712"/>
    </location>
</feature>
<feature type="site" description="Cleavage; by serine protease/helicase NS3" evidence="6">
    <location>
        <begin position="1972"/>
        <end position="1973"/>
    </location>
</feature>
<feature type="site" description="Cleavage; by serine protease/helicase NS3" evidence="6">
    <location>
        <begin position="2419"/>
        <end position="2420"/>
    </location>
</feature>
<feature type="modified residue" description="N-acetylserine; by host" evidence="11">
    <location>
        <position position="2"/>
    </location>
</feature>
<feature type="modified residue" description="Phosphoserine; by host" evidence="8">
    <location>
        <position position="53"/>
    </location>
</feature>
<feature type="modified residue" description="Phosphoserine; by host" evidence="8">
    <location>
        <position position="99"/>
    </location>
</feature>
<feature type="modified residue" description="Phosphoserine; by host PKA" evidence="8">
    <location>
        <position position="116"/>
    </location>
</feature>
<feature type="modified residue" description="Phosphoserine; by host; in p56" evidence="21">
    <location>
        <position position="2194"/>
    </location>
</feature>
<feature type="modified residue" description="Phosphoserine; by host; in p58" evidence="21">
    <location>
        <position position="2197"/>
    </location>
</feature>
<feature type="modified residue" description="Phosphoserine; by host; in p56 and p58, regulates intracellular NS5A distribution" evidence="12 21">
    <location>
        <position position="2201"/>
    </location>
</feature>
<feature type="modified residue" description="Phosphoserine; by host; in p58" evidence="21">
    <location>
        <position position="2204"/>
    </location>
</feature>
<feature type="modified residue" description="Phosphoserine; by host; in p58" evidence="12">
    <location>
        <position position="2207"/>
    </location>
</feature>
<feature type="modified residue" description="Phosphoserine; by host; in p58" evidence="12">
    <location>
        <position position="2210"/>
    </location>
</feature>
<feature type="modified residue" description="Phosphoserine; by host" evidence="3">
    <location>
        <position position="2448"/>
    </location>
</feature>
<feature type="modified residue" description="Phosphoserine; by host" evidence="3">
    <location>
        <position position="2461"/>
    </location>
</feature>
<feature type="lipid moiety-binding region" description="S-palmitoyl cysteine; by host" evidence="6">
    <location>
        <position position="922"/>
    </location>
</feature>
<feature type="lipid moiety-binding region" description="S-palmitoyl cysteine; by host" evidence="6">
    <location>
        <position position="1968"/>
    </location>
</feature>
<feature type="lipid moiety-binding region" description="S-palmitoyl cysteine; by host" evidence="6">
    <location>
        <position position="1972"/>
    </location>
</feature>
<feature type="glycosylation site" description="N-linked (GlcNAc...) asparagine; by host" evidence="6">
    <location>
        <position position="196"/>
    </location>
</feature>
<feature type="glycosylation site" description="N-linked (GlcNAc...) asparagine; by host" evidence="6">
    <location>
        <position position="209"/>
    </location>
</feature>
<feature type="glycosylation site" description="N-linked (GlcNAc...) asparagine; by host" evidence="6">
    <location>
        <position position="234"/>
    </location>
</feature>
<feature type="glycosylation site" description="N-linked (GlcNAc...) asparagine; by host" evidence="6">
    <location>
        <position position="250"/>
    </location>
</feature>
<feature type="glycosylation site" description="N-linked (GlcNAc...) asparagine; by host" evidence="13">
    <location>
        <position position="305"/>
    </location>
</feature>
<feature type="glycosylation site" description="N-linked (GlcNAc...) asparagine; by host" evidence="13">
    <location>
        <position position="417"/>
    </location>
</feature>
<feature type="glycosylation site" description="N-linked (GlcNAc...) (high mannose) asparagine; by host" evidence="6">
    <location>
        <position position="423"/>
    </location>
</feature>
<feature type="glycosylation site" description="N-linked (GlcNAc...) (high mannose) asparagine; by host" evidence="6">
    <location>
        <position position="430"/>
    </location>
</feature>
<feature type="glycosylation site" description="N-linked (GlcNAc...) (high mannose) asparagine; by host" evidence="6">
    <location>
        <position position="448"/>
    </location>
</feature>
<feature type="glycosylation site" description="N-linked (GlcNAc...) (high mannose) asparagine; by host" evidence="6">
    <location>
        <position position="532"/>
    </location>
</feature>
<feature type="glycosylation site" description="N-linked (GlcNAc...) (high mannose) asparagine; by host" evidence="6">
    <location>
        <position position="556"/>
    </location>
</feature>
<feature type="glycosylation site" description="N-linked (GlcNAc...) (high mannose) asparagine; by host" evidence="6">
    <location>
        <position position="576"/>
    </location>
</feature>
<feature type="glycosylation site" description="N-linked (GlcNAc...) (high mannose) asparagine; by host" evidence="6">
    <location>
        <position position="623"/>
    </location>
</feature>
<feature type="glycosylation site" description="N-linked (GlcNAc...) (high mannose) asparagine; by host" evidence="6">
    <location>
        <position position="645"/>
    </location>
</feature>
<feature type="disulfide bond" evidence="6">
    <location>
        <begin position="429"/>
        <end position="552"/>
    </location>
</feature>
<feature type="disulfide bond" evidence="6">
    <location>
        <begin position="452"/>
        <end position="459"/>
    </location>
</feature>
<feature type="disulfide bond" evidence="6">
    <location>
        <begin position="486"/>
        <end position="494"/>
    </location>
</feature>
<feature type="disulfide bond" evidence="6">
    <location>
        <begin position="503"/>
        <end position="508"/>
    </location>
</feature>
<feature type="disulfide bond" evidence="6">
    <location>
        <begin position="564"/>
        <end position="569"/>
    </location>
</feature>
<feature type="disulfide bond" evidence="6">
    <location>
        <begin position="581"/>
        <end position="585"/>
    </location>
</feature>
<feature type="disulfide bond" evidence="6">
    <location>
        <begin position="597"/>
        <end position="620"/>
    </location>
</feature>
<feature type="disulfide bond" evidence="6">
    <location>
        <begin position="607"/>
        <end position="644"/>
    </location>
</feature>
<feature type="disulfide bond" evidence="6">
    <location>
        <begin position="652"/>
        <end position="677"/>
    </location>
</feature>
<feature type="cross-link" description="Glycyl lysine isopeptide (Lys-Gly) (interchain with G-Cter in ubiquitin)" evidence="6">
    <location>
        <position position="2350"/>
    </location>
</feature>
<feature type="sequence variant">
    <original>S</original>
    <variation>I</variation>
    <location>
        <position position="2204"/>
    </location>
</feature>
<feature type="mutagenesis site" description="Impaired NS2-E2, NS2-p7 and NS2-NS3 interactions; slight decrease in NS2-NS5A interaction. Impaired NS2 colocalization with NS5A." evidence="26">
    <original>W</original>
    <variation>F</variation>
    <location>
        <position position="844"/>
    </location>
</feature>
<feature type="mutagenesis site" description="Impaired NS2-E2, NS2-p7 and NS2-NS3 interactions; slight decrease in NS2-NS5A interaction. Impaired NS2 colocalization with NS5A." evidence="26">
    <original>F</original>
    <variation>A</variation>
    <location>
        <position position="886"/>
    </location>
</feature>
<feature type="mutagenesis site" description="Decreases viral RNA replication without significantly affecting ATP-dependent duplex unwinding." evidence="29">
    <original>F</original>
    <variation>P</variation>
    <location>
        <position position="1264"/>
    </location>
</feature>
<feature type="mutagenesis site" description="No effect on replication." evidence="21">
    <original>S</original>
    <variation>A</variation>
    <location>
        <position position="2158"/>
    </location>
</feature>
<feature type="mutagenesis site" description="No effect on replication." evidence="21">
    <original>S</original>
    <variation>A</variation>
    <location>
        <position position="2173"/>
    </location>
</feature>
<feature type="mutagenesis site" description="No effect on replication." evidence="21">
    <original>S</original>
    <variation>A</variation>
    <location>
        <position position="2179"/>
    </location>
</feature>
<feature type="mutagenesis site" description="No effect on replication. No effect on NS5A hyperphosphorylation." evidence="21">
    <original>S</original>
    <variation>A</variation>
    <location>
        <position position="2194"/>
    </location>
</feature>
<feature type="mutagenesis site" description="No effect on replication. No effect on NS5A hyperphosphorylation." evidence="21">
    <original>S</original>
    <variation>E</variation>
    <location>
        <position position="2194"/>
    </location>
</feature>
<feature type="mutagenesis site" description="Enhanced replication. Decreased NS5A hyperphosphorylation." evidence="21">
    <original>S</original>
    <variation>A</variation>
    <location>
        <position position="2197"/>
    </location>
</feature>
<feature type="mutagenesis site" description="No effect on replication. Decreased NS5A hyperphosphorylation." evidence="21">
    <original>S</original>
    <variation>E</variation>
    <location>
        <position position="2197"/>
    </location>
</feature>
<feature type="mutagenesis site" description="No effect on replication. Decreased NS5A hyperphosphorylation." evidence="21">
    <original>S</original>
    <variation>A</variation>
    <location>
        <position position="2200"/>
    </location>
</feature>
<feature type="mutagenesis site" description="No effect on replication. Decreased NS5A hyperphosphorylation." evidence="21">
    <original>S</original>
    <variation>E</variation>
    <location>
        <position position="2200"/>
    </location>
</feature>
<feature type="mutagenesis site" description="Enhanced replication. Decreased NS5A hyperphosphorylation." evidence="21">
    <original>S</original>
    <variation>A</variation>
    <location>
        <position position="2201"/>
    </location>
</feature>
<feature type="mutagenesis site" description="Enhanced replication. Decreased NS5A hyperphosphorylation." evidence="21">
    <original>S</original>
    <variation>E</variation>
    <location>
        <position position="2201"/>
    </location>
</feature>
<feature type="mutagenesis site" description="Enhanced replication. No effect on NS5A hyperphosphorylation." evidence="21">
    <original>S</original>
    <variation>A</variation>
    <location>
        <position position="2202"/>
    </location>
</feature>
<feature type="mutagenesis site" description="No effect on replication. Decreased NS5A hyperphosphorylation." evidence="21">
    <original>S</original>
    <variation>E</variation>
    <location>
        <position position="2202"/>
    </location>
</feature>
<feature type="mutagenesis site" description="Enhanced replication. Decreased NS5A hyperphosphorylation." evidence="21">
    <original>S</original>
    <variation>A</variation>
    <location>
        <position position="2204"/>
    </location>
</feature>
<feature type="mutagenesis site" description="No effect on replication. No effect on NS5A hyperphosphorylation." evidence="21">
    <original>S</original>
    <variation>E</variation>
    <location>
        <position position="2204"/>
    </location>
</feature>
<feature type="mutagenesis site" description="Enhanced replication. No effect on hyperphosphorylation." evidence="21">
    <original>S</original>
    <variation>A</variation>
    <location>
        <position position="2207"/>
    </location>
</feature>
<feature type="mutagenesis site" description="No effect on replication." evidence="21">
    <original>S</original>
    <variation>E</variation>
    <location>
        <position position="2207"/>
    </location>
</feature>
<feature type="mutagenesis site" description="No effect on replication. No effect on hyperphosphorylation." evidence="21">
    <original>S</original>
    <variation>A</variation>
    <location>
        <position position="2210"/>
    </location>
</feature>
<feature type="mutagenesis site" description="No effect on replication. No effect on hyperphosphorylation." evidence="21">
    <original>S</original>
    <variation>E</variation>
    <location>
        <position position="2210"/>
    </location>
</feature>
<feature type="mutagenesis site" description="No effect on hyperphosphorylation.">
    <original>S</original>
    <variation>A</variation>
    <location>
        <position position="2221"/>
    </location>
</feature>
<feature type="mutagenesis site" description="No effect on replication." evidence="21">
    <original>S</original>
    <variation>A</variation>
    <location>
        <position position="2246"/>
    </location>
</feature>
<feature type="mutagenesis site" description="No effect on replication." evidence="21">
    <original>S</original>
    <variation>A</variation>
    <location>
        <position position="2255"/>
    </location>
</feature>
<feature type="mutagenesis site" description="No effect on replication." evidence="21">
    <original>S</original>
    <variation>A</variation>
    <location>
        <position position="2269"/>
    </location>
</feature>
<feature type="helix" evidence="56">
    <location>
        <begin position="813"/>
        <end position="816"/>
    </location>
</feature>
<feature type="helix" evidence="56">
    <location>
        <begin position="821"/>
        <end position="831"/>
    </location>
</feature>
<feature type="helix" evidence="57">
    <location>
        <begin position="843"/>
        <end position="857"/>
    </location>
</feature>
<feature type="helix" evidence="58">
    <location>
        <begin position="873"/>
        <end position="879"/>
    </location>
</feature>
<feature type="helix" evidence="58">
    <location>
        <begin position="882"/>
        <end position="894"/>
    </location>
</feature>
<feature type="helix" evidence="58">
    <location>
        <begin position="898"/>
        <end position="901"/>
    </location>
</feature>
<feature type="turn" evidence="58">
    <location>
        <begin position="902"/>
        <end position="905"/>
    </location>
</feature>
<feature type="strand" evidence="67">
    <location>
        <begin position="1030"/>
        <end position="1035"/>
    </location>
</feature>
<feature type="helix" evidence="67">
    <location>
        <begin position="1039"/>
        <end position="1048"/>
    </location>
</feature>
<feature type="strand" evidence="67">
    <location>
        <begin position="1057"/>
        <end position="1063"/>
    </location>
</feature>
<feature type="strand" evidence="67">
    <location>
        <begin position="1068"/>
        <end position="1074"/>
    </location>
</feature>
<feature type="strand" evidence="67">
    <location>
        <begin position="1077"/>
        <end position="1081"/>
    </location>
</feature>
<feature type="helix" evidence="67">
    <location>
        <begin position="1082"/>
        <end position="1085"/>
    </location>
</feature>
<feature type="strand" evidence="67">
    <location>
        <begin position="1100"/>
        <end position="1103"/>
    </location>
</feature>
<feature type="helix" evidence="67">
    <location>
        <begin position="1104"/>
        <end position="1106"/>
    </location>
</feature>
<feature type="strand" evidence="67">
    <location>
        <begin position="1108"/>
        <end position="1112"/>
    </location>
</feature>
<feature type="strand" evidence="67">
    <location>
        <begin position="1128"/>
        <end position="1133"/>
    </location>
</feature>
<feature type="strand" evidence="67">
    <location>
        <begin position="1139"/>
        <end position="1144"/>
    </location>
</feature>
<feature type="strand" evidence="67">
    <location>
        <begin position="1146"/>
        <end position="1158"/>
    </location>
</feature>
<feature type="turn" evidence="67">
    <location>
        <begin position="1159"/>
        <end position="1163"/>
    </location>
</feature>
<feature type="strand" evidence="67">
    <location>
        <begin position="1168"/>
        <end position="1170"/>
    </location>
</feature>
<feature type="strand" evidence="67">
    <location>
        <begin position="1176"/>
        <end position="1186"/>
    </location>
</feature>
<feature type="strand" evidence="67">
    <location>
        <begin position="1189"/>
        <end position="1197"/>
    </location>
</feature>
<feature type="helix" evidence="67">
    <location>
        <begin position="1198"/>
        <end position="1204"/>
    </location>
</feature>
<feature type="strand" evidence="63">
    <location>
        <begin position="1224"/>
        <end position="1229"/>
    </location>
</feature>
<feature type="turn" evidence="63">
    <location>
        <begin position="1236"/>
        <end position="1238"/>
    </location>
</feature>
<feature type="helix" evidence="63">
    <location>
        <begin position="1239"/>
        <end position="1246"/>
    </location>
</feature>
<feature type="strand" evidence="63">
    <location>
        <begin position="1251"/>
        <end position="1256"/>
    </location>
</feature>
<feature type="helix" evidence="63">
    <location>
        <begin position="1258"/>
        <end position="1271"/>
    </location>
</feature>
<feature type="strand" evidence="63">
    <location>
        <begin position="1277"/>
        <end position="1279"/>
    </location>
</feature>
<feature type="strand" evidence="63">
    <location>
        <begin position="1290"/>
        <end position="1295"/>
    </location>
</feature>
<feature type="helix" evidence="63">
    <location>
        <begin position="1296"/>
        <end position="1301"/>
    </location>
</feature>
<feature type="strand" evidence="63">
    <location>
        <begin position="1311"/>
        <end position="1315"/>
    </location>
</feature>
<feature type="turn" evidence="63">
    <location>
        <begin position="1316"/>
        <end position="1319"/>
    </location>
</feature>
<feature type="helix" evidence="63">
    <location>
        <begin position="1323"/>
        <end position="1335"/>
    </location>
</feature>
<feature type="turn" evidence="63">
    <location>
        <begin position="1336"/>
        <end position="1340"/>
    </location>
</feature>
<feature type="strand" evidence="63">
    <location>
        <begin position="1342"/>
        <end position="1350"/>
    </location>
</feature>
<feature type="strand" evidence="63">
    <location>
        <begin position="1362"/>
        <end position="1366"/>
    </location>
</feature>
<feature type="strand" evidence="63">
    <location>
        <begin position="1371"/>
        <end position="1375"/>
    </location>
</feature>
<feature type="strand" evidence="63">
    <location>
        <begin position="1378"/>
        <end position="1380"/>
    </location>
</feature>
<feature type="helix" evidence="63">
    <location>
        <begin position="1382"/>
        <end position="1384"/>
    </location>
</feature>
<feature type="strand" evidence="63">
    <location>
        <begin position="1386"/>
        <end position="1393"/>
    </location>
</feature>
<feature type="helix" evidence="63">
    <location>
        <begin position="1397"/>
        <end position="1409"/>
    </location>
</feature>
<feature type="strand" evidence="63">
    <location>
        <begin position="1414"/>
        <end position="1417"/>
    </location>
</feature>
<feature type="helix" evidence="63">
    <location>
        <begin position="1423"/>
        <end position="1425"/>
    </location>
</feature>
<feature type="strand" evidence="63">
    <location>
        <begin position="1428"/>
        <end position="1436"/>
    </location>
</feature>
<feature type="helix" evidence="63">
    <location>
        <begin position="1438"/>
        <end position="1440"/>
    </location>
</feature>
<feature type="strand" evidence="63">
    <location>
        <begin position="1441"/>
        <end position="1443"/>
    </location>
</feature>
<feature type="strand" evidence="63">
    <location>
        <begin position="1448"/>
        <end position="1453"/>
    </location>
</feature>
<feature type="strand" evidence="63">
    <location>
        <begin position="1456"/>
        <end position="1463"/>
    </location>
</feature>
<feature type="strand" evidence="63">
    <location>
        <begin position="1467"/>
        <end position="1469"/>
    </location>
</feature>
<feature type="strand" evidence="63">
    <location>
        <begin position="1471"/>
        <end position="1478"/>
    </location>
</feature>
<feature type="helix" evidence="63">
    <location>
        <begin position="1481"/>
        <end position="1488"/>
    </location>
</feature>
<feature type="strand" evidence="63">
    <location>
        <begin position="1493"/>
        <end position="1495"/>
    </location>
</feature>
<feature type="strand" evidence="63">
    <location>
        <begin position="1497"/>
        <end position="1503"/>
    </location>
</feature>
<feature type="strand" evidence="62">
    <location>
        <begin position="1509"/>
        <end position="1511"/>
    </location>
</feature>
<feature type="helix" evidence="63">
    <location>
        <begin position="1514"/>
        <end position="1526"/>
    </location>
</feature>
<feature type="helix" evidence="63">
    <location>
        <begin position="1532"/>
        <end position="1543"/>
    </location>
</feature>
<feature type="helix" evidence="63">
    <location>
        <begin position="1555"/>
        <end position="1563"/>
    </location>
</feature>
<feature type="helix" evidence="63">
    <location>
        <begin position="1570"/>
        <end position="1579"/>
    </location>
</feature>
<feature type="helix" evidence="63">
    <location>
        <begin position="1584"/>
        <end position="1597"/>
    </location>
</feature>
<feature type="helix" evidence="63">
    <location>
        <begin position="1606"/>
        <end position="1617"/>
    </location>
</feature>
<feature type="strand" evidence="63">
    <location>
        <begin position="1626"/>
        <end position="1629"/>
    </location>
</feature>
<feature type="helix" evidence="63">
    <location>
        <begin position="1640"/>
        <end position="1648"/>
    </location>
</feature>
<feature type="strand" evidence="61">
    <location>
        <begin position="1680"/>
        <end position="1689"/>
    </location>
</feature>
<feature type="turn" evidence="60">
    <location>
        <begin position="2007"/>
        <end position="2009"/>
    </location>
</feature>
<feature type="strand" evidence="60">
    <location>
        <begin position="2017"/>
        <end position="2021"/>
    </location>
</feature>
<feature type="strand" evidence="60">
    <location>
        <begin position="2023"/>
        <end position="2028"/>
    </location>
</feature>
<feature type="strand" evidence="60">
    <location>
        <begin position="2034"/>
        <end position="2040"/>
    </location>
</feature>
<feature type="strand" evidence="60">
    <location>
        <begin position="2043"/>
        <end position="2047"/>
    </location>
</feature>
<feature type="helix" evidence="60">
    <location>
        <begin position="2053"/>
        <end position="2057"/>
    </location>
</feature>
<feature type="strand" evidence="60">
    <location>
        <begin position="2067"/>
        <end position="2069"/>
    </location>
</feature>
<feature type="strand" evidence="60">
    <location>
        <begin position="2071"/>
        <end position="2073"/>
    </location>
</feature>
<feature type="strand" evidence="60">
    <location>
        <begin position="2079"/>
        <end position="2086"/>
    </location>
</feature>
<feature type="strand" evidence="60">
    <location>
        <begin position="2089"/>
        <end position="2096"/>
    </location>
</feature>
<feature type="strand" evidence="60">
    <location>
        <begin position="2099"/>
        <end position="2107"/>
    </location>
</feature>
<feature type="helix" evidence="60">
    <location>
        <begin position="2119"/>
        <end position="2121"/>
    </location>
</feature>
<feature type="strand" evidence="60">
    <location>
        <begin position="2123"/>
        <end position="2125"/>
    </location>
</feature>
<feature type="strand" evidence="60">
    <location>
        <begin position="2146"/>
        <end position="2149"/>
    </location>
</feature>
<feature type="strand" evidence="60">
    <location>
        <begin position="2152"/>
        <end position="2155"/>
    </location>
</feature>
<feature type="strand" evidence="59">
    <location>
        <begin position="2421"/>
        <end position="2425"/>
    </location>
</feature>
<feature type="helix" evidence="59">
    <location>
        <begin position="2444"/>
        <end position="2447"/>
    </location>
</feature>
<feature type="helix" evidence="59">
    <location>
        <begin position="2453"/>
        <end position="2455"/>
    </location>
</feature>
<feature type="strand" evidence="59">
    <location>
        <begin position="2456"/>
        <end position="2458"/>
    </location>
</feature>
<feature type="helix" evidence="59">
    <location>
        <begin position="2461"/>
        <end position="2463"/>
    </location>
</feature>
<feature type="helix" evidence="59">
    <location>
        <begin position="2464"/>
        <end position="2471"/>
    </location>
</feature>
<feature type="helix" evidence="59">
    <location>
        <begin position="2481"/>
        <end position="2494"/>
    </location>
</feature>
<feature type="helix" evidence="59">
    <location>
        <begin position="2504"/>
        <end position="2509"/>
    </location>
</feature>
<feature type="turn" evidence="64">
    <location>
        <begin position="2519"/>
        <end position="2521"/>
    </location>
</feature>
<feature type="helix" evidence="59">
    <location>
        <begin position="2524"/>
        <end position="2528"/>
    </location>
</feature>
<feature type="helix" evidence="59">
    <location>
        <begin position="2532"/>
        <end position="2547"/>
    </location>
</feature>
<feature type="strand" evidence="59">
    <location>
        <begin position="2549"/>
        <end position="2551"/>
    </location>
</feature>
<feature type="strand" evidence="59">
    <location>
        <begin position="2555"/>
        <end position="2559"/>
    </location>
</feature>
<feature type="strand" evidence="59">
    <location>
        <begin position="2563"/>
        <end position="2565"/>
    </location>
</feature>
<feature type="strand" evidence="68">
    <location>
        <begin position="2569"/>
        <end position="2571"/>
    </location>
</feature>
<feature type="strand" evidence="59">
    <location>
        <begin position="2578"/>
        <end position="2581"/>
    </location>
</feature>
<feature type="helix" evidence="59">
    <location>
        <begin position="2584"/>
        <end position="2606"/>
    </location>
</feature>
<feature type="helix" evidence="59">
    <location>
        <begin position="2607"/>
        <end position="2609"/>
    </location>
</feature>
<feature type="helix" evidence="59">
    <location>
        <begin position="2611"/>
        <end position="2613"/>
    </location>
</feature>
<feature type="helix" evidence="59">
    <location>
        <begin position="2616"/>
        <end position="2629"/>
    </location>
</feature>
<feature type="strand" evidence="59">
    <location>
        <begin position="2630"/>
        <end position="2640"/>
    </location>
</feature>
<feature type="helix" evidence="59">
    <location>
        <begin position="2643"/>
        <end position="2646"/>
    </location>
</feature>
<feature type="helix" evidence="59">
    <location>
        <begin position="2649"/>
        <end position="2659"/>
    </location>
</feature>
<feature type="helix" evidence="59">
    <location>
        <begin position="2666"/>
        <end position="2678"/>
    </location>
</feature>
<feature type="turn" evidence="66">
    <location>
        <begin position="2679"/>
        <end position="2681"/>
    </location>
</feature>
<feature type="strand" evidence="59">
    <location>
        <begin position="2683"/>
        <end position="2686"/>
    </location>
</feature>
<feature type="strand" evidence="65">
    <location>
        <begin position="2688"/>
        <end position="2690"/>
    </location>
</feature>
<feature type="strand" evidence="59">
    <location>
        <begin position="2692"/>
        <end position="2696"/>
    </location>
</feature>
<feature type="helix" evidence="59">
    <location>
        <begin position="2706"/>
        <end position="2725"/>
    </location>
</feature>
<feature type="strand" evidence="59">
    <location>
        <begin position="2728"/>
        <end position="2735"/>
    </location>
</feature>
<feature type="strand" evidence="59">
    <location>
        <begin position="2738"/>
        <end position="2744"/>
    </location>
</feature>
<feature type="helix" evidence="59">
    <location>
        <begin position="2748"/>
        <end position="2764"/>
    </location>
</feature>
<feature type="strand" evidence="59">
    <location>
        <begin position="2769"/>
        <end position="2771"/>
    </location>
</feature>
<feature type="strand" evidence="59">
    <location>
        <begin position="2776"/>
        <end position="2778"/>
    </location>
</feature>
<feature type="helix" evidence="59">
    <location>
        <begin position="2779"/>
        <end position="2781"/>
    </location>
</feature>
<feature type="strand" evidence="59">
    <location>
        <begin position="2787"/>
        <end position="2793"/>
    </location>
</feature>
<feature type="strand" evidence="59">
    <location>
        <begin position="2799"/>
        <end position="2804"/>
    </location>
</feature>
<feature type="helix" evidence="59">
    <location>
        <begin position="2808"/>
        <end position="2819"/>
    </location>
</feature>
<feature type="helix" evidence="59">
    <location>
        <begin position="2826"/>
        <end position="2833"/>
    </location>
</feature>
<feature type="turn" evidence="59">
    <location>
        <begin position="2834"/>
        <end position="2836"/>
    </location>
</feature>
<feature type="helix" evidence="59">
    <location>
        <begin position="2838"/>
        <end position="2842"/>
    </location>
</feature>
<feature type="helix" evidence="59">
    <location>
        <begin position="2844"/>
        <end position="2855"/>
    </location>
</feature>
<feature type="strand" evidence="66">
    <location>
        <begin position="2858"/>
        <end position="2860"/>
    </location>
</feature>
<feature type="strand" evidence="59">
    <location>
        <begin position="2862"/>
        <end position="2866"/>
    </location>
</feature>
<feature type="strand" evidence="59">
    <location>
        <begin position="2869"/>
        <end position="2873"/>
    </location>
</feature>
<feature type="helix" evidence="59">
    <location>
        <begin position="2875"/>
        <end position="2877"/>
    </location>
</feature>
<feature type="helix" evidence="59">
    <location>
        <begin position="2878"/>
        <end position="2886"/>
    </location>
</feature>
<feature type="helix" evidence="59">
    <location>
        <begin position="2888"/>
        <end position="2891"/>
    </location>
</feature>
<feature type="helix" evidence="59">
    <location>
        <begin position="2898"/>
        <end position="2911"/>
    </location>
</feature>
<feature type="helix" evidence="59">
    <location>
        <begin position="2916"/>
        <end position="2932"/>
    </location>
</feature>
<feature type="helix" evidence="59">
    <location>
        <begin position="2935"/>
        <end position="2944"/>
    </location>
</feature>
<feature type="helix" evidence="59">
    <location>
        <begin position="2946"/>
        <end position="2948"/>
    </location>
</feature>
<feature type="strand" evidence="71">
    <location>
        <begin position="2949"/>
        <end position="2951"/>
    </location>
</feature>
<feature type="helix" evidence="59">
    <location>
        <begin position="2959"/>
        <end position="2963"/>
    </location>
</feature>
<feature type="turn" evidence="69">
    <location>
        <begin position="2967"/>
        <end position="2970"/>
    </location>
</feature>
<feature type="turn" evidence="59">
    <location>
        <begin position="2974"/>
        <end position="2976"/>
    </location>
</feature>
<feature type="strand" evidence="59">
    <location>
        <begin position="2980"/>
        <end position="2982"/>
    </location>
</feature>
<feature type="strand" evidence="70">
    <location>
        <begin position="2984"/>
        <end position="2987"/>
    </location>
</feature>
<organismHost>
    <name type="scientific">Homo sapiens</name>
    <name type="common">Human</name>
    <dbReference type="NCBI Taxonomy" id="9606"/>
</organismHost>
<reference key="1">
    <citation type="journal article" date="1999" name="Science">
        <title>Replication of subgenomic hepatitis C virus RNAs in a hepatoma cell line.</title>
        <authorList>
            <person name="Lohmann V."/>
            <person name="Koerner F."/>
            <person name="Koch J.O."/>
            <person name="Herian U."/>
            <person name="Theilmann L."/>
            <person name="Bartenschlager R."/>
        </authorList>
    </citation>
    <scope>NUCLEOTIDE SEQUENCE [GENOMIC RNA]</scope>
</reference>
<reference key="2">
    <citation type="journal article" date="2003" name="Science">
        <title>Regulation of interferon regulatory factor-3 by the hepatitis C virus serine protease.</title>
        <authorList>
            <person name="Foy E."/>
            <person name="Li K."/>
            <person name="Wang C."/>
            <person name="Sumpter R. Jr."/>
            <person name="Ikeda M."/>
            <person name="Lemon S.M."/>
            <person name="Gale M. Jr."/>
        </authorList>
    </citation>
    <scope>FUNCTION (SERINE PROTEASE/HELICASE NS3)</scope>
    <scope>FUNCTION (NON-STRUCTURAL PROTEIN 4A)</scope>
</reference>
<reference key="3">
    <citation type="journal article" date="2004" name="J. Virol.">
        <title>Reduction of hepatitis C virus NS5A hyperphosphorylation by selective inhibition of cellular kinases activates viral RNA replication in cell culture.</title>
        <authorList>
            <person name="Neddermann P."/>
            <person name="Quintavalle M."/>
            <person name="Di Pietro C."/>
            <person name="Clementi A."/>
            <person name="Cerretani M."/>
            <person name="Altamura S."/>
            <person name="Bartholomew L."/>
            <person name="De Francesco R."/>
        </authorList>
    </citation>
    <scope>FUNCTION (NON-STRUCTURAL PROTEIN 5A)</scope>
</reference>
<reference key="4">
    <citation type="journal article" date="2005" name="J. Virol.">
        <title>Mutational analysis of hepatitis C virus nonstructural protein 5A: potential role of differential phosphorylation in RNA replication and identification of a genetically flexible domain.</title>
        <authorList>
            <person name="Appel N."/>
            <person name="Pietschmann T."/>
            <person name="Bartenschlager R."/>
        </authorList>
    </citation>
    <scope>PHOSPHORYLATION AT SER-2194; SER-2197; SER-2201 AND SER-2204</scope>
    <scope>MUTAGENESIS OF SER-2158; SER-2173; SER-2179; SER-2194; SER-2197; SER-2200; SER-2201; SER-2202; SER-2204; SER-2207; SER-2210; SER-2246; SER-2255 AND SER-2269</scope>
</reference>
<reference key="5">
    <citation type="journal article" date="2005" name="Hepatology">
        <title>Interaction between the HCV NS3 protein and the host TBK1 protein leads to inhibition of cellular antiviral responses.</title>
        <authorList>
            <person name="Otsuka M."/>
            <person name="Kato N."/>
            <person name="Moriyama M."/>
            <person name="Taniguchi H."/>
            <person name="Wang Y."/>
            <person name="Dharel N."/>
            <person name="Kawabe T."/>
            <person name="Omata M."/>
        </authorList>
    </citation>
    <scope>INTERACTION WITH HOST TBK1 (SERINE PROTEASE/HELICASE NS3)</scope>
    <scope>FUNCTION (SERINE PROTEASE/HELICASE NS3)</scope>
</reference>
<reference key="6">
    <citation type="journal article" date="2000" name="J. Viral Hepat.">
        <title>Properties of the hepatitis C virus core protein: a structural protein that modulates cellular processes.</title>
        <authorList>
            <person name="McLauchlan J."/>
        </authorList>
    </citation>
    <scope>REVIEW</scope>
</reference>
<reference key="7">
    <citation type="journal article" date="2004" name="Hepatology">
        <title>Structural biology of hepatitis C virus.</title>
        <authorList>
            <person name="Penin F."/>
            <person name="Dubuisson J."/>
            <person name="Rey F.A."/>
            <person name="Moradpour D."/>
            <person name="Pawlotsky J.-M."/>
        </authorList>
    </citation>
    <scope>REVIEW</scope>
</reference>
<reference key="8">
    <citation type="journal article" date="2011" name="FEBS Lett.">
        <title>Phospholipid scramblase 1 mediates hepatitis C virus entry into host cells.</title>
        <authorList>
            <person name="Gong Q."/>
            <person name="Cheng M."/>
            <person name="Chen H."/>
            <person name="Liu X."/>
            <person name="Si Y."/>
            <person name="Yang Y."/>
            <person name="Yuan Y."/>
            <person name="Jin C."/>
            <person name="Yang W."/>
            <person name="He F."/>
            <person name="Wang J."/>
        </authorList>
    </citation>
    <scope>INTERACTION WITH HUMAN PLCR1 (ENVELOP GLYCOPROTEIN 1)</scope>
    <scope>INTERACTION WITH HUMAN PLCR1 (ENVELOP GLYCOPROTEIN 2)</scope>
</reference>
<reference key="9">
    <citation type="journal article" date="2005" name="Nature">
        <title>Structure of the zinc-binding domain of an essential component of the hepatitis C virus replicase.</title>
        <authorList>
            <person name="Tellinghuisen T.L."/>
            <person name="Marcotrigiano J."/>
            <person name="Rice C.M."/>
        </authorList>
    </citation>
    <scope>X-RAY CRYSTALLOGRAPHY (2.50 ANGSTROMS) OF 2008-2170 IN COMPLEX WITH ZINC</scope>
</reference>
<reference evidence="36" key="10">
    <citation type="journal article" date="2009" name="J. Virol.">
        <title>Crystal structure of a novel dimeric form of NS5A domain I protein from hepatitis C virus.</title>
        <authorList>
            <person name="Love R.A."/>
            <person name="Brodsky O."/>
            <person name="Hickey M.J."/>
            <person name="Wells P.A."/>
            <person name="Cronin C.N."/>
        </authorList>
    </citation>
    <scope>X-RAY CRYSTALLOGRAPHY (1.9 ANGSTROMS) OF 2005-2174 IN COMPLEX WITH ZINC</scope>
    <scope>SUBUNIT (NON-STRUCTURAL PROTEIN 5A)</scope>
</reference>
<reference evidence="35" key="11">
    <citation type="journal article" date="2009" name="J. Biol. Chem.">
        <title>Slow binding inhibition and mechanism of resistance of non-nucleoside polymerase inhibitors of hepatitis C virus.</title>
        <authorList>
            <person name="Hang J.Q."/>
            <person name="Yang Y."/>
            <person name="Harris S.F."/>
            <person name="Leveque V."/>
            <person name="Whittington H.J."/>
            <person name="Rajyaguru S."/>
            <person name="Ao-Ieong G."/>
            <person name="McCown M.F."/>
            <person name="Wong A."/>
            <person name="Giannetti A.M."/>
            <person name="Le Pogam S."/>
            <person name="Talamas F."/>
            <person name="Cammack N."/>
            <person name="Najera I."/>
            <person name="Klumpp K."/>
        </authorList>
    </citation>
    <scope>X-RAY CRYSTALLOGRAPHY (1.80 ANGSTROMS) OF 2421-2989</scope>
</reference>
<reference evidence="37" key="12">
    <citation type="journal article" date="2010" name="Bioorg. Med. Chem. Lett.">
        <title>P4 capped amides and lactams as HCV NS3 protease inhibitors with improved potency and DMPK profile.</title>
        <authorList>
            <person name="Nair L.G."/>
            <person name="Sannigrahi M."/>
            <person name="Bogen S."/>
            <person name="Pinto P."/>
            <person name="Chen K.X."/>
            <person name="Prongay A."/>
            <person name="Tong X."/>
            <person name="Cheng K.C."/>
            <person name="Girijavallabhan V."/>
            <person name="George Njoroge F."/>
        </authorList>
    </citation>
    <scope>X-RAY CRYSTALLOGRAPHY (2.30 ANGSTROMS) OF 1676-1698</scope>
</reference>
<reference evidence="33 34" key="13">
    <citation type="journal article" date="2010" name="PLoS Pathog.">
        <title>Structural and functional studies of nonstructural protein 2 of the hepatitis C virus reveal its key role as organizer of virion assembly.</title>
        <authorList>
            <person name="Jirasko V."/>
            <person name="Montserret R."/>
            <person name="Lee J.Y."/>
            <person name="Gouttenoire J."/>
            <person name="Moradpour D."/>
            <person name="Penin F."/>
            <person name="Bartenschlager R."/>
        </authorList>
    </citation>
    <scope>STRUCTURE BY NMR OF 869-908</scope>
    <scope>TOPOLOGY (PROTEASE NS2)</scope>
    <scope>SUBCELLULAR LOCATION (PROTEASE NS2)</scope>
    <scope>SUBCELLULAR LOCATION (NON-STRUCTURAL PROTEIN 5A)</scope>
    <scope>SUBCELLULAR LOCATION (ENVELOPE GLYCOPROTEIN E2)</scope>
    <scope>INTERACTION WITH SERINE PROTEASE/HELICASE NS3 (PROTEASE NS2)</scope>
    <scope>INTERACTION WITH PROTEASE NS2 (SERINE PROTEASE/HELICASE NS3)</scope>
    <scope>INTERACTION WITH ENVELOPE GLYCOPROTEIN E2 (PROTEASE NS2)</scope>
    <scope>INTERACTION WITH PROTEASE NS2 (ENVELOPE GLYCOPROTEIN E2)</scope>
    <scope>INTERACTION WITH NON-STRUCTURAL PROTEIN 5A (PROTEASE NS2)</scope>
    <scope>INTERACTION WITH PROTEASE NS2 (NON-STRUCTURAL PROTEIN 5A)</scope>
    <scope>INTERACTION WITH VIROPORIN P7 (PROTEASE NS2)</scope>
    <scope>INTERACTION WITH PROTEASE NS2 (VIROPORIN P7)</scope>
    <scope>MUTAGENESIS OF TRP-844 AND PHE-886</scope>
    <scope>FUNCTION (PROTEASE NS2)</scope>
</reference>
<reference evidence="38 39 40 41 42" key="14">
    <citation type="journal article" date="2010" name="Proc. Natl. Acad. Sci. U.S.A.">
        <title>Three conformational snapshots of the hepatitis C virus NS3 helicase reveal a ratchet translocation mechanism.</title>
        <authorList>
            <person name="Gu M."/>
            <person name="Rice C.M."/>
        </authorList>
    </citation>
    <scope>X-RAY CRYSTALLOGRAPHY (2.05 ANGSTROMS) OF 1215-1650 IN COMPLEX WITH ADP</scope>
    <scope>COFACTOR (SERINE PROTEASE/HELICASE NS3)</scope>
</reference>
<reference evidence="43" key="15">
    <citation type="journal article" date="2014" name="J. Med. Chem.">
        <title>Discovery and preclinical characterization of the cyclopropylindolobenzazepine BMS-791325, a potent allosteric inhibitor of the hepatitis C virus NS5B polymerase.</title>
        <authorList>
            <person name="Gentles R.G."/>
            <person name="Ding M."/>
            <person name="Bender J.A."/>
            <person name="Bergstrom C.P."/>
            <person name="Grant-Young K."/>
            <person name="Hewawasam P."/>
            <person name="Hudyma T."/>
            <person name="Martin S."/>
            <person name="Nickel A."/>
            <person name="Regueiro-Ren A."/>
            <person name="Tu Y."/>
            <person name="Yang Z."/>
            <person name="Yeung K.S."/>
            <person name="Zheng X."/>
            <person name="Chao S."/>
            <person name="Sun J.H."/>
            <person name="Beno B.R."/>
            <person name="Camac D.M."/>
            <person name="Chang C.H."/>
            <person name="Gao M."/>
            <person name="Morin P.E."/>
            <person name="Sheriff S."/>
            <person name="Tredup J."/>
            <person name="Wan J."/>
            <person name="Witmer M.R."/>
            <person name="Xie D."/>
            <person name="Hanumegowda U."/>
            <person name="Knipe J."/>
            <person name="Mosure K."/>
            <person name="Santone K.S."/>
            <person name="Parker D.D."/>
            <person name="Zhuo X."/>
            <person name="Lemm J."/>
            <person name="Liu M."/>
            <person name="Pelosi L."/>
            <person name="Rigat K."/>
            <person name="Voss S."/>
            <person name="Wang Y."/>
            <person name="Wang Y.K."/>
            <person name="Colonno R.J."/>
            <person name="Gao M."/>
            <person name="Roberts S.B."/>
            <person name="Gao Q."/>
            <person name="Ng A."/>
            <person name="Meanwell N.A."/>
            <person name="Kadow J.F."/>
        </authorList>
    </citation>
    <scope>X-RAY CRYSTALLOGRAPHY (2.75 ANGSTROMS) OF 2420-2992</scope>
</reference>
<reference evidence="44" key="16">
    <citation type="journal article" date="2015" name="Bioorg. Med. Chem. Lett.">
        <title>Discovery and structural diversity of the hepatitis C virus NS3/4A serine protease inhibitor series leading to clinical candidate IDX320.</title>
        <authorList>
            <person name="Parsy C.C."/>
            <person name="Alexandre F.R."/>
            <person name="Bidau V."/>
            <person name="Bonnaterre F."/>
            <person name="Brandt G."/>
            <person name="Caillet C."/>
            <person name="Cappelle S."/>
            <person name="Chaves D."/>
            <person name="Convard T."/>
            <person name="Derock M."/>
            <person name="Gloux D."/>
            <person name="Griffon Y."/>
            <person name="Lallos L.B."/>
            <person name="Leroy F."/>
            <person name="Liuzzi M."/>
            <person name="Loi A.G."/>
            <person name="Moulat L."/>
            <person name="Chiara M."/>
            <person name="Rahali H."/>
            <person name="Roques V."/>
            <person name="Rosinovsky E."/>
            <person name="Savin S."/>
            <person name="Seifer M."/>
            <person name="Standring D."/>
            <person name="Surleraux D."/>
        </authorList>
    </citation>
    <scope>X-RAY CRYSTALLOGRAPHY (2.80 ANGSTROMS) OF 1026-1206 IN COMPLEX WITH ZINC</scope>
</reference>
<reference evidence="45" key="17">
    <citation type="journal article" date="2016" name="J. Biol. Chem.">
        <title>The Spring alpha-Helix Coordinates Multiple Modes of HCV (Hepatitis C Virus) NS3 Helicase Action.</title>
        <authorList>
            <person name="Gu M."/>
            <person name="Rice C.M."/>
        </authorList>
    </citation>
    <scope>X-RAY CRYSTALLOGRAPHY (2.10 ANGSTROMS) OF 1215-1651 IN COMPLEX WITH ADP</scope>
    <scope>CATALYTIC ACTIVITY (SERINE PROTEASE/HELICASE NS3)</scope>
    <scope>MUTAGENESIS OF PHE-1264</scope>
    <scope>FUNCTION (SERINE PROTEASE/HELICASE NS3)</scope>
</reference>
<reference evidence="52 53 54 55" key="18">
    <citation type="journal article" date="2017" name="Bioorg. Med. Chem. Lett.">
        <title>Discovery and initial optimization of alkoxyanthranilic acid derivatives as inhibitors of HCV NS5B polymerase.</title>
        <authorList>
            <person name="Parcella K."/>
            <person name="Nickel A."/>
            <person name="Beno B.R."/>
            <person name="Sheriff S."/>
            <person name="Wan C."/>
            <person name="Wang Y.K."/>
            <person name="Roberts S.B."/>
            <person name="Meanwell N.A."/>
            <person name="Kadow J.F."/>
        </authorList>
    </citation>
    <scope>X-RAY CRYSTALLOGRAPHY (2.06 ANGSTROMS) OF 2420-2992</scope>
</reference>
<reference evidence="46 47 48 49 50 51" key="19">
    <citation type="journal article" date="2017" name="J. Med. Chem.">
        <title>Discovery of a Hepatitis C Virus NS5B Replicase Palm Site Allosteric Inhibitor (BMS-929075) Advanced to Phase 1 Clinical Studies.</title>
        <authorList>
            <person name="Yeung K.S."/>
            <person name="Beno B.R."/>
            <person name="Parcella K."/>
            <person name="Bender J.A."/>
            <person name="Grant-Young K.A."/>
            <person name="Nickel A."/>
            <person name="Gunaga P."/>
            <person name="Anjanappa P."/>
            <person name="Bora R.O."/>
            <person name="Selvakumar K."/>
            <person name="Rigat K."/>
            <person name="Wang Y.K."/>
            <person name="Liu M."/>
            <person name="Lemm J."/>
            <person name="Mosure K."/>
            <person name="Sheriff S."/>
            <person name="Wan C."/>
            <person name="Witmer M."/>
            <person name="Kish K."/>
            <person name="Hanumegowda U."/>
            <person name="Zhuo X."/>
            <person name="Shu Y.Z."/>
            <person name="Parker D."/>
            <person name="Haskell R."/>
            <person name="Ng A."/>
            <person name="Gao Q."/>
            <person name="Colston E."/>
            <person name="Raybon J."/>
            <person name="Grasela D.M."/>
            <person name="Santone K."/>
            <person name="Gao M."/>
            <person name="Meanwell N.A."/>
            <person name="Sinz M."/>
            <person name="Soars M.G."/>
            <person name="Knipe J.O."/>
            <person name="Roberts S.B."/>
            <person name="Kadow J.F."/>
        </authorList>
    </citation>
    <scope>X-RAY CRYSTALLOGRAPHY (2.06 ANGSTROMS) OF 2420-2992</scope>
</reference>
<protein>
    <recommendedName>
        <fullName>Genome polyprotein</fullName>
    </recommendedName>
    <component>
        <recommendedName>
            <fullName>Core protein precursor</fullName>
        </recommendedName>
        <alternativeName>
            <fullName>Capsid protein C</fullName>
        </alternativeName>
        <alternativeName>
            <fullName>p23</fullName>
        </alternativeName>
    </component>
    <component>
        <recommendedName>
            <fullName>Mature core protein</fullName>
        </recommendedName>
        <alternativeName>
            <fullName>p21</fullName>
        </alternativeName>
    </component>
    <component>
        <recommendedName>
            <fullName>Envelope glycoprotein E1</fullName>
        </recommendedName>
        <alternativeName>
            <fullName>gp32</fullName>
        </alternativeName>
        <alternativeName>
            <fullName>gp35</fullName>
        </alternativeName>
    </component>
    <component>
        <recommendedName>
            <fullName>Envelope glycoprotein E2</fullName>
        </recommendedName>
        <alternativeName>
            <fullName>NS1</fullName>
        </alternativeName>
        <alternativeName>
            <fullName>gp68</fullName>
        </alternativeName>
        <alternativeName>
            <fullName>gp70</fullName>
        </alternativeName>
    </component>
    <component>
        <recommendedName>
            <fullName>Viroporin p7</fullName>
        </recommendedName>
    </component>
    <component>
        <recommendedName>
            <fullName>Protease NS2</fullName>
            <shortName>p23</shortName>
            <ecNumber evidence="4">3.4.22.-</ecNumber>
        </recommendedName>
    </component>
    <component>
        <recommendedName>
            <fullName>Serine protease/helicase NS3</fullName>
            <ecNumber evidence="6">3.4.21.98</ecNumber>
            <ecNumber evidence="25">3.6.1.15</ecNumber>
            <ecNumber evidence="25">3.6.4.13</ecNumber>
        </recommendedName>
        <alternativeName>
            <fullName>Hepacivirin</fullName>
        </alternativeName>
        <alternativeName>
            <fullName evidence="30">NS3 helicase</fullName>
        </alternativeName>
        <alternativeName>
            <fullName evidence="6">NS3 protease</fullName>
        </alternativeName>
        <alternativeName>
            <fullName>NS3P</fullName>
        </alternativeName>
        <alternativeName>
            <fullName>Viroporin p70</fullName>
        </alternativeName>
    </component>
    <component>
        <recommendedName>
            <fullName>Non-structural protein 4A</fullName>
            <shortName>NS4A</shortName>
        </recommendedName>
        <alternativeName>
            <fullName>p8</fullName>
        </alternativeName>
    </component>
    <component>
        <recommendedName>
            <fullName>Non-structural protein 4B</fullName>
            <shortName>NS4B</shortName>
        </recommendedName>
        <alternativeName>
            <fullName>p27</fullName>
        </alternativeName>
    </component>
    <component>
        <recommendedName>
            <fullName>Non-structural protein 5A</fullName>
            <shortName>NS5A</shortName>
        </recommendedName>
        <alternativeName>
            <fullName>p56/58</fullName>
        </alternativeName>
    </component>
    <component>
        <recommendedName>
            <fullName>RNA-directed RNA polymerase</fullName>
            <ecNumber evidence="6">2.7.7.48</ecNumber>
        </recommendedName>
        <alternativeName>
            <fullName>NS5B</fullName>
        </alternativeName>
        <alternativeName>
            <fullName>p68</fullName>
        </alternativeName>
    </component>
</protein>
<sequence length="3010" mass="326906">MSTNPKPQRKTKRNTNRRPQDVKFPGGGQIVGGVYLLPRRGPRLGVRATRKTSERSQPRGRRQPIPKARQPEGRAWAQPGYPWPLYGNEGLGWAGWLLSPRGSRPSWGPTDPRRRSRNLGKVIDTLTCGFADLMGYIPLVGAPLGGAARALAHGVRVLEDGVNYATGNLPGCSFSIFLLALLSCLTIPASAYEVRNVSGVYHVTNDCSNASIVYEAADMIMHTPGCVPCVRENNSSRCWVALTPTLAARNASVPTTTIRRHVDLLVGAAALCSAMYVGDLCGSVFLVAQLFTFSPRRHETVQDCNCSIYPGHVTGHRMAWDMMMNWSPTAALVVSQLLRIPQAVVDMVAGAHWGVLAGLAYYSMVGNWAKVLIVMLLFAGVDGGTYVTGGTMAKNTLGITSLFSPGSSQKIQLVNTNGSWHINRTALNCNDSLNTGFLAALFYVHKFNSSGCPERMASCSPIDAFAQGWGPITYNESHSSDQRPYCWHYAPRPCGIVPAAQVCGPVYCFTPSPVVVGTTDRFGVPTYSWGENETDVLLLNNTRPPQGNWFGCTWMNSTGFTKTCGGPPCNIGGIGNKTLTCPTDCFRKHPEATYTKCGSGPWLTPRCLVHYPYRLWHYPCTVNFTIFKVRMYVGGVEHRLEAACNWTRGERCNLEDRDRSELSPLLLSTTEWQVLPCSFTTLPALSTGLIHLHQNVVDVQYLYGIGSAVVSFAIKWEYVLLLFLLLADARVCACLWMMLLIAQAEAALENLVVLNAASVAGAHGILSFLVFFCAAWYIKGRLVPGAAYALYGVWPLLLLLLALPPRAYAMDREMAASCGGAVFVGLILLTLSPHYKLFLARLIWWLQYFITRAEAHLQVWIPPLNVRGGRDAVILLTCAIHPELIFTITKILLAILGPLMVLQAGITKVPYFVRAHGLIRACMLVRKVAGGHYVQMALMKLAALTGTYVYDHLTPLRDWAHAGLRDLAVAVEPVVFSDMETKVITWGADTAACGDIILGLPVSARRGREIHLGPADSLEGQGWRLLAPITAYSQQTRGLLGCIITSLTGRDRNQVEGEVQVVSTATQSFLATCVNGVCWTVYHGAGSKTLAGPKGPITQMYTNVDQDLVGWQAPPGARSLTPCTCGSSDLYLVTRHADVIPVRRRGDSRGSLLSPRPVSYLKGSSGGPLLCPSGHAVGIFRAAVCTRGVAKAVDFVPVESMETTMRSPVFTDNSSPPAVPQTFQVAHLHAPTGSGKSTKVPAAYAAQGYKVLVLNPSVAATLGFGAYMSKAHGIDPNIRTGVRTITTGAPITYSTYGKFLADGGCSGGAYDIIICDECHSTDSTTILGIGTVLDQAETAGARLVVLATATPPGSVTVPHPNIEEVALSSTGEIPFYGKAIPIETIKGGRHLIFCHSKKKCDELAAKLSGLGLNAVAYYRGLDVSVIPTSGDVIVVATDALMTGFTGDFDSVIDCNTCVTQTVDFSLDPTFTIETTTVPQDAVSRSQRRGRTGRGRMGIYRFVTPGERPSGMFDSSVLCECYDAGCAWYELTPAETSVRLRAYLNTPGLPVCQDHLEFWESVFTGLTHIDAHFLSQTKQAGDNFPYLVAYQATVCARAQAPPPSWDQMWKCLIRLKPTLHGPTPLLYRLGAVQNEVTTTHPITKYIMACMSADLEVVTSTWVLVGGVLAALAAYCLTTGSVVIVGRIILSGKPAIIPDREVLYREFDEMEECASHLPYIEQGMQLAEQFKQKAIGLLQTATKQAEAAAPVVESKWRTLEAFWAKHMWNFISGIQYLAGLSTLPGNPAIASLMAFTASITSPLTTQHTLLFNILGGWVAAQLAPPSAASAFVGAGIAGAAVGSIGLGKVLVDILAGYGAGVAGALVAFKVMSGEMPSTEDLVNLLPAILSPGALVVGVVCAAILRRHVGPGEGAVQWMNRLIAFASRGNHVSPTHYVPESDAAARVTQILSSLTITQLLKRLHQWINEDCSTPCSGSWLRDVWDWICTVLTDFKTWLQSKLLPRLPGVPFFSCQRGYKGVWRGDGIMQTTCPCGAQITGHVKNGSMRIVGPRTCSNTWHGTFPINAYTTGPCTPSPAPNYSRALWRVAAEEYVEVTRVGDFHYVTGMTTDNVKCPCQVPAPEFFTEVDGVRLHRYAPACKPLLREEVTFLVGLNQYLVGSQLPCEPEPDVAVLTSMLTDPSHITAETAKRRLARGSPPSLASSSASQLSAPSLKATCTTRHDSPDADLIEANLLWRQEMGGNITRVESENKVVILDSFEPLQAEEDEREVSVPAEILRRSRKFPRAMPIWARPDYNPPLLESWKDPDYVPPVVHGCPLPPAKAPPIPPPRRKRTVVLSESTVSSALAELATKTFGSSESSAVDSGTATASPDQPSDDGDAGSDVESYSSMPPLEGEPGDPDLSDGSWSTVSEEASEDVVCCSMSYTWTGALITPCAAEETKLPINALSNSLLRHHNLVYATTSRSASLRQKKVTFDRLQVLDDHYRDVLKEMKAKASTVKAKLLSVEEACKLTPPHSARSKFGYGAKDVRNLSSKAVNHIRSVWKDLLEDTETPIDTTIMAKNEVFCVQPEKGGRKPARLIVFPDLGVRVCEKMALYDVVSTLPQAVMGSSYGFQYSPGQRVEFLVNAWKAKKCPMGFAYDTRCFDSTVTENDIRVEESIYQCCDLAPEARQAIRSLTERLYIGGPLTNSKGQNCGYRRCRASGVLTTSCGNTLTCYLKAAAACRAAKLQDCTMLVCGDDLVVICESAGTQEDEASLRAFTEAMTRYSAPPGDPPKPEYDLELITSCSSNVSVAHDASGKRVYYLTRDPTTPLARAAWETARHTPVNSWLGNIIMYAPTLWARMILMTHFFSILLAQEQLEKALDCQIYGACYSIEPLDLPQIIQRLHGLSAFSLHSYSPGEINRVASCLRKLGVPPLRVWRHRARSVRARLLSQGGRAATCGKYLFNWAVRTKLKLTPIPAASQLDLSSWFVAGYSGGDIYHSLSRARPRWFMWCLLLLSVGVGIYLLPNR</sequence>